<feature type="chain" id="PRO_0000194057" description="Protein argonaute-2">
    <location>
        <begin position="1"/>
        <end position="859"/>
    </location>
</feature>
<feature type="domain" description="PAZ" evidence="4">
    <location>
        <begin position="229"/>
        <end position="348"/>
    </location>
</feature>
<feature type="domain" description="Piwi" evidence="3">
    <location>
        <begin position="517"/>
        <end position="818"/>
    </location>
</feature>
<feature type="region of interest" description="Disordered" evidence="5">
    <location>
        <begin position="1"/>
        <end position="27"/>
    </location>
</feature>
<feature type="region of interest" description="Interaction with guide RNA">
    <location>
        <begin position="311"/>
        <end position="316"/>
    </location>
</feature>
<feature type="region of interest" description="Interaction with guide RNA">
    <location>
        <begin position="524"/>
        <end position="566"/>
    </location>
</feature>
<feature type="region of interest" description="Interaction with GW182 family members" evidence="2">
    <location>
        <begin position="587"/>
        <end position="590"/>
    </location>
</feature>
<feature type="region of interest" description="Interaction with GW182 family members" evidence="2">
    <location>
        <begin position="650"/>
        <end position="660"/>
    </location>
</feature>
<feature type="region of interest" description="Interaction with guide RNA">
    <location>
        <begin position="709"/>
        <end position="710"/>
    </location>
</feature>
<feature type="region of interest" description="Interaction with guide RNA">
    <location>
        <begin position="753"/>
        <end position="761"/>
    </location>
</feature>
<feature type="region of interest" description="Interaction with guide RNA">
    <location>
        <begin position="790"/>
        <end position="812"/>
    </location>
</feature>
<feature type="compositionally biased region" description="Pro residues" evidence="5">
    <location>
        <begin position="9"/>
        <end position="27"/>
    </location>
</feature>
<feature type="binding site" evidence="62">
    <location>
        <position position="597"/>
    </location>
    <ligand>
        <name>a divalent metal cation</name>
        <dbReference type="ChEBI" id="CHEBI:60240"/>
    </ligand>
</feature>
<feature type="binding site" evidence="62">
    <location>
        <position position="669"/>
    </location>
    <ligand>
        <name>a divalent metal cation</name>
        <dbReference type="ChEBI" id="CHEBI:60240"/>
    </ligand>
</feature>
<feature type="binding site" evidence="62">
    <location>
        <position position="807"/>
    </location>
    <ligand>
        <name>a divalent metal cation</name>
        <dbReference type="ChEBI" id="CHEBI:60240"/>
    </ligand>
</feature>
<feature type="modified residue" description="3'-nitrotyrosine" evidence="1 3">
    <location>
        <position position="2"/>
    </location>
</feature>
<feature type="modified residue" description="Phosphoserine" evidence="45 64">
    <location>
        <position position="387"/>
    </location>
</feature>
<feature type="modified residue" description="4-hydroxyproline" evidence="3 32">
    <location>
        <position position="700"/>
    </location>
</feature>
<feature type="modified residue" description="Phosphoserine" evidence="50">
    <location>
        <position position="824"/>
    </location>
</feature>
<feature type="modified residue" description="Phosphoserine" evidence="50 64">
    <location>
        <position position="828"/>
    </location>
</feature>
<feature type="modified residue" description="Phosphoserine" evidence="50">
    <location>
        <position position="831"/>
    </location>
</feature>
<feature type="modified residue" description="Phosphoserine" evidence="50">
    <location>
        <position position="834"/>
    </location>
</feature>
<feature type="splice variant" id="VSP_037001" description="In isoform 2." evidence="61">
    <location>
        <begin position="724"/>
        <end position="757"/>
    </location>
</feature>
<feature type="sequence variant" id="VAR_085417" description="In LESKRES; impairs shRNA-mediated silencing. Does not affect targeting to P-bodies. Increases binding to mRNA targets. Does not affect interaction with DICER1. Decreased phosphorylation of the C-terminal serine cluster. Does not affect phosphorylation of Ser-387; dbSNP:rs2073179658." evidence="58">
    <original>L</original>
    <variation>P</variation>
    <location>
        <position position="192"/>
    </location>
</feature>
<feature type="sequence variant" id="VAR_085418" description="In LESKRES; impairs shRNA-mediated silencing. Does not affect targeting to P-bodies. Increases binding to mRNA targets. Does not affect interaction with DICER1. Decreased phosphorylation of the C-terminal serine cluster. Does not affect phosphorylation of Ser-387." evidence="58">
    <original>G</original>
    <variation>C</variation>
    <location>
        <position position="201"/>
    </location>
</feature>
<feature type="sequence variant" id="VAR_085419" description="In LESKRES; dbSNP:rs2132941125." evidence="58">
    <original>G</original>
    <variation>V</variation>
    <location>
        <position position="201"/>
    </location>
</feature>
<feature type="sequence variant" id="VAR_085420" description="In LESKRES; impairs shRNA-mediated silencing. Does not affect targeting to P-bodies. Increases binding to mRNA targets. Does not affect interaction with DICER1. Does not affect phosphorylation of the C-terminal serine cluster. Does not affect phosphorylation of Ser-387." evidence="58">
    <original>H</original>
    <variation>Q</variation>
    <location>
        <position position="203"/>
    </location>
</feature>
<feature type="sequence variant" id="VAR_085421" description="In LESKRES; dbSNP:rs2073092496." evidence="58">
    <original>T</original>
    <variation>M</variation>
    <location>
        <position position="357"/>
    </location>
</feature>
<feature type="sequence variant" id="VAR_085422" description="In LESKRES; impairs shRNA-mediated silencing. Does not affect targeting to P-bodies. Increases binding to mRNA targets. Does not affect interaction with DICER1. Decreased phosphorylation of the C-terminal serine cluster. Does not affect phosphorylation of Ser-387; dbSNP:rs2073092234." evidence="58">
    <original>M</original>
    <variation>T</variation>
    <location>
        <position position="364"/>
    </location>
</feature>
<feature type="sequence variant" id="VAR_085423" description="In LESKRES; impairs shRNA-mediated silencing. Decreased phosphorylation of the C-terminal serine cluster. Increased binding to mRNA targets." evidence="58">
    <original>A</original>
    <variation>P</variation>
    <location>
        <position position="367"/>
    </location>
</feature>
<feature type="sequence variant" id="VAR_085424" description="In LESKRES." evidence="58">
    <original>G</original>
    <variation>S</variation>
    <location>
        <position position="573"/>
    </location>
</feature>
<feature type="sequence variant" id="VAR_085425" description="In LESKRES; complete loss of function. Changes in the subcellular location pattern. Diffuse location into the cytoplasm. Does not bind mRNA. Abolishes interaction with DICER1. Abolishes phosphorylation of the C-terminal serine cluster. Does not affect phosphorylation of Ser-387; dbSNP:rs2072681689." evidence="58">
    <original>G</original>
    <variation>R</variation>
    <location>
        <position position="733"/>
    </location>
</feature>
<feature type="sequence variant" id="VAR_085426" description="In LESKRES; dbSNP:rs2072680461." evidence="58">
    <original>C</original>
    <variation>Y</variation>
    <location>
        <position position="751"/>
    </location>
</feature>
<feature type="sequence variant" id="VAR_085427" description="In LESKRES; impairs shRNA-mediated silencing. Does not affect targeting to P-bodies. Increases binding to mRNA targets. Does not affect interaction with DICER1. Decreased phosphorylation of a C-terminal serine cluster. Does not affect phosphorylation of Ser-387." evidence="58">
    <original>S</original>
    <variation>R</variation>
    <location>
        <position position="760"/>
    </location>
</feature>
<feature type="mutagenesis site" description="No effect." evidence="11">
    <original>L</original>
    <variation>W</variation>
    <location>
        <position position="140"/>
    </location>
</feature>
<feature type="mutagenesis site" description="No effect on miRNA-binding or target mRNA cleavage. Abrogates binding to the 7-methylguanosine cap of mRNA and prevents inhibition of translation. Abolishes interaction with TNRC6C; when associated with V-505." evidence="27 39">
    <original>F</original>
    <variation>V</variation>
    <location>
        <position position="470"/>
    </location>
</feature>
<feature type="mutagenesis site" description="No effect on binding to the 7-methylguanosine cap of mRNA or inhibition of translation." evidence="27 39">
    <original>F</original>
    <variation>W</variation>
    <location>
        <position position="470"/>
    </location>
</feature>
<feature type="mutagenesis site" description="No effect on miRNA-binding or target mRNA cleavage. Abrogates binding to the 7-methylguanosine cap of mRNA and prevents inhibition of translation and abolishes interaction with TNRC6C; when associated with V-470." evidence="27 39">
    <original>F</original>
    <variation>V</variation>
    <location>
        <position position="505"/>
    </location>
</feature>
<feature type="mutagenesis site" description="No effect on binding to the 7-methylguanosine cap of mRNA or inhibition of translation." evidence="27 39">
    <original>F</original>
    <variation>W</variation>
    <location>
        <position position="505"/>
    </location>
</feature>
<feature type="mutagenesis site" description="Impairs RNA cleavage." evidence="14">
    <original>K</original>
    <variation>A</variation>
    <location>
        <position position="533"/>
    </location>
</feature>
<feature type="mutagenesis site" description="Impairs RNA cleavage." evidence="14">
    <original>Q</original>
    <variation>A</variation>
    <location>
        <position position="545"/>
    </location>
</feature>
<feature type="mutagenesis site" description="Impairs RNA cleavage." evidence="14">
    <original>K</original>
    <variation>A</variation>
    <location>
        <position position="570"/>
    </location>
</feature>
<feature type="mutagenesis site" description="Abrogates RNA cleavage but does not affect binding to siRNA or translational repression." evidence="11 15 33">
    <original>D</original>
    <variation>A</variation>
    <location>
        <position position="597"/>
    </location>
</feature>
<feature type="mutagenesis site" description="No effect." evidence="11">
    <original>Q</original>
    <variation>A</variation>
    <location>
        <position position="633"/>
    </location>
</feature>
<feature type="mutagenesis site" description="Abrogates RNA cleavage. Binds siRNA." evidence="11">
    <original>Q</original>
    <variation>R</variation>
    <location>
        <position position="633"/>
    </location>
</feature>
<feature type="mutagenesis site" description="Abrogates RNA cleavage. Binds siRNA." evidence="11">
    <original>H</original>
    <variation>P</variation>
    <variation>A</variation>
    <location>
        <position position="634"/>
    </location>
</feature>
<feature type="mutagenesis site" description="Abrogates RNA cleavage but does not affect binding to siRNA." evidence="11 15 21">
    <original>D</original>
    <variation>A</variation>
    <location>
        <position position="669"/>
    </location>
</feature>
<feature type="mutagenesis site" description="Impairs RNA cleavage." evidence="15 46">
    <original>E</original>
    <variation>A</variation>
    <location>
        <position position="673"/>
    </location>
</feature>
<feature type="mutagenesis site" description="No effect on RNA cleavage." evidence="15 46">
    <original>E</original>
    <variation>G</variation>
    <location>
        <position position="673"/>
    </location>
</feature>
<feature type="mutagenesis site" description="Impairs RNA cleavage." evidence="46">
    <original>F</original>
    <variation>A</variation>
    <variation>I</variation>
    <variation>M</variation>
    <variation>R</variation>
    <variation>Y</variation>
    <location>
        <position position="676"/>
    </location>
</feature>
<feature type="mutagenesis site" description="Abrogates RNA cleavage." evidence="46">
    <original>F</original>
    <variation>V</variation>
    <location>
        <position position="676"/>
    </location>
</feature>
<feature type="mutagenesis site" description="No effect." evidence="11">
    <original>H</original>
    <variation>Y</variation>
    <location>
        <position position="682"/>
    </location>
</feature>
<feature type="mutagenesis site" description="No effect on RNA cleavage." evidence="15">
    <original>E</original>
    <variation>G</variation>
    <location>
        <position position="683"/>
    </location>
</feature>
<feature type="mutagenesis site" description="Reduced protein stability." evidence="32">
    <original>P</original>
    <variation>A</variation>
    <location>
        <position position="700"/>
    </location>
</feature>
<feature type="mutagenesis site" description="No effect." evidence="11">
    <original>F</original>
    <variation>Y</variation>
    <location>
        <position position="704"/>
    </location>
</feature>
<feature type="mutagenesis site" description="No effect." evidence="11">
    <original>T</original>
    <variation>Y</variation>
    <location>
        <position position="744"/>
    </location>
</feature>
<feature type="mutagenesis site" description="Abrogates RNA cleavage." evidence="15 46">
    <original>H</original>
    <variation>A</variation>
    <variation>R</variation>
    <location>
        <position position="807"/>
    </location>
</feature>
<feature type="sequence conflict" description="In Ref. 5; AAF13034." evidence="62" ref="5">
    <original>C</original>
    <variation>W</variation>
    <location>
        <position position="564"/>
    </location>
</feature>
<feature type="sequence conflict" description="In Ref. 5; AAF13034." evidence="62" ref="5">
    <original>Q</original>
    <variation>E</variation>
    <location>
        <position position="589"/>
    </location>
</feature>
<feature type="sequence conflict" description="In Ref. 5; AAF13034." evidence="62" ref="5">
    <original>S</original>
    <variation>R</variation>
    <location>
        <position position="617"/>
    </location>
</feature>
<feature type="sequence conflict" description="In Ref. 3; AAL76093." evidence="62" ref="3">
    <original>E</original>
    <variation>K</variation>
    <location>
        <position position="637"/>
    </location>
</feature>
<feature type="strand" evidence="69">
    <location>
        <begin position="35"/>
        <end position="48"/>
    </location>
</feature>
<feature type="strand" evidence="69">
    <location>
        <begin position="53"/>
        <end position="63"/>
    </location>
</feature>
<feature type="helix" evidence="69">
    <location>
        <begin position="68"/>
        <end position="81"/>
    </location>
</feature>
<feature type="turn" evidence="69">
    <location>
        <begin position="82"/>
        <end position="86"/>
    </location>
</feature>
<feature type="strand" evidence="69">
    <location>
        <begin position="96"/>
        <end position="104"/>
    </location>
</feature>
<feature type="turn" evidence="69">
    <location>
        <begin position="107"/>
        <end position="110"/>
    </location>
</feature>
<feature type="strand" evidence="69">
    <location>
        <begin position="113"/>
        <end position="117"/>
    </location>
</feature>
<feature type="strand" evidence="67">
    <location>
        <begin position="122"/>
        <end position="124"/>
    </location>
</feature>
<feature type="strand" evidence="69">
    <location>
        <begin position="128"/>
        <end position="139"/>
    </location>
</feature>
<feature type="helix" evidence="69">
    <location>
        <begin position="140"/>
        <end position="147"/>
    </location>
</feature>
<feature type="strand" evidence="69">
    <location>
        <begin position="150"/>
        <end position="153"/>
    </location>
</feature>
<feature type="helix" evidence="69">
    <location>
        <begin position="156"/>
        <end position="167"/>
    </location>
</feature>
<feature type="helix" evidence="69">
    <location>
        <begin position="170"/>
        <end position="173"/>
    </location>
</feature>
<feature type="strand" evidence="69">
    <location>
        <begin position="174"/>
        <end position="177"/>
    </location>
</feature>
<feature type="strand" evidence="69">
    <location>
        <begin position="180"/>
        <end position="183"/>
    </location>
</feature>
<feature type="strand" evidence="74">
    <location>
        <begin position="185"/>
        <end position="187"/>
    </location>
</feature>
<feature type="strand" evidence="69">
    <location>
        <begin position="191"/>
        <end position="193"/>
    </location>
</feature>
<feature type="strand" evidence="69">
    <location>
        <begin position="196"/>
        <end position="207"/>
    </location>
</feature>
<feature type="strand" evidence="69">
    <location>
        <begin position="210"/>
        <end position="225"/>
    </location>
</feature>
<feature type="helix" evidence="69">
    <location>
        <begin position="230"/>
        <end position="238"/>
    </location>
</feature>
<feature type="helix" evidence="69">
    <location>
        <begin position="243"/>
        <end position="245"/>
    </location>
</feature>
<feature type="helix" evidence="69">
    <location>
        <begin position="252"/>
        <end position="262"/>
    </location>
</feature>
<feature type="strand" evidence="69">
    <location>
        <begin position="266"/>
        <end position="268"/>
    </location>
</feature>
<feature type="strand" evidence="73">
    <location>
        <begin position="271"/>
        <end position="274"/>
    </location>
</feature>
<feature type="strand" evidence="69">
    <location>
        <begin position="278"/>
        <end position="288"/>
    </location>
</feature>
<feature type="turn" evidence="69">
    <location>
        <begin position="289"/>
        <end position="291"/>
    </location>
</feature>
<feature type="strand" evidence="72">
    <location>
        <begin position="293"/>
        <end position="295"/>
    </location>
</feature>
<feature type="strand" evidence="65">
    <location>
        <begin position="299"/>
        <end position="301"/>
    </location>
</feature>
<feature type="strand" evidence="72">
    <location>
        <begin position="305"/>
        <end position="307"/>
    </location>
</feature>
<feature type="helix" evidence="69">
    <location>
        <begin position="308"/>
        <end position="316"/>
    </location>
</feature>
<feature type="strand" evidence="69">
    <location>
        <begin position="325"/>
        <end position="331"/>
    </location>
</feature>
<feature type="helix" evidence="72">
    <location>
        <begin position="333"/>
        <end position="335"/>
    </location>
</feature>
<feature type="strand" evidence="69">
    <location>
        <begin position="337"/>
        <end position="340"/>
    </location>
</feature>
<feature type="helix" evidence="69">
    <location>
        <begin position="341"/>
        <end position="343"/>
    </location>
</feature>
<feature type="strand" evidence="72">
    <location>
        <begin position="344"/>
        <end position="346"/>
    </location>
</feature>
<feature type="strand" evidence="66">
    <location>
        <begin position="348"/>
        <end position="351"/>
    </location>
</feature>
<feature type="helix" evidence="69">
    <location>
        <begin position="358"/>
        <end position="368"/>
    </location>
</feature>
<feature type="helix" evidence="69">
    <location>
        <begin position="372"/>
        <end position="386"/>
    </location>
</feature>
<feature type="helix" evidence="69">
    <location>
        <begin position="388"/>
        <end position="390"/>
    </location>
</feature>
<feature type="helix" evidence="69">
    <location>
        <begin position="392"/>
        <end position="396"/>
    </location>
</feature>
<feature type="strand" evidence="69">
    <location>
        <begin position="406"/>
        <end position="412"/>
    </location>
</feature>
<feature type="turn" evidence="69">
    <location>
        <begin position="422"/>
        <end position="425"/>
    </location>
</feature>
<feature type="strand" evidence="69">
    <location>
        <begin position="450"/>
        <end position="455"/>
    </location>
</feature>
<feature type="turn" evidence="69">
    <location>
        <begin position="459"/>
        <end position="461"/>
    </location>
</feature>
<feature type="helix" evidence="69">
    <location>
        <begin position="464"/>
        <end position="480"/>
    </location>
</feature>
<feature type="strand" evidence="69">
    <location>
        <begin position="490"/>
        <end position="494"/>
    </location>
</feature>
<feature type="helix" evidence="69">
    <location>
        <begin position="498"/>
        <end position="500"/>
    </location>
</feature>
<feature type="helix" evidence="69">
    <location>
        <begin position="501"/>
        <end position="511"/>
    </location>
</feature>
<feature type="strand" evidence="69">
    <location>
        <begin position="517"/>
        <end position="522"/>
    </location>
</feature>
<feature type="helix" evidence="69">
    <location>
        <begin position="528"/>
        <end position="537"/>
    </location>
</feature>
<feature type="turn" evidence="69">
    <location>
        <begin position="538"/>
        <end position="540"/>
    </location>
</feature>
<feature type="strand" evidence="69">
    <location>
        <begin position="544"/>
        <end position="548"/>
    </location>
</feature>
<feature type="helix" evidence="69">
    <location>
        <begin position="550"/>
        <end position="553"/>
    </location>
</feature>
<feature type="helix" evidence="69">
    <location>
        <begin position="557"/>
        <end position="570"/>
    </location>
</feature>
<feature type="helix" evidence="69">
    <location>
        <begin position="580"/>
        <end position="582"/>
    </location>
</feature>
<feature type="helix" evidence="69">
    <location>
        <begin position="585"/>
        <end position="588"/>
    </location>
</feature>
<feature type="strand" evidence="69">
    <location>
        <begin position="591"/>
        <end position="599"/>
    </location>
</feature>
<feature type="turn" evidence="70">
    <location>
        <begin position="603"/>
        <end position="605"/>
    </location>
</feature>
<feature type="strand" evidence="69">
    <location>
        <begin position="610"/>
        <end position="617"/>
    </location>
</feature>
<feature type="strand" evidence="69">
    <location>
        <begin position="619"/>
        <end position="622"/>
    </location>
</feature>
<feature type="strand" evidence="69">
    <location>
        <begin position="625"/>
        <end position="633"/>
    </location>
</feature>
<feature type="helix" evidence="69">
    <location>
        <begin position="642"/>
        <end position="657"/>
    </location>
</feature>
<feature type="strand" evidence="69">
    <location>
        <begin position="662"/>
        <end position="669"/>
    </location>
</feature>
<feature type="helix" evidence="69">
    <location>
        <begin position="673"/>
        <end position="675"/>
    </location>
</feature>
<feature type="helix" evidence="69">
    <location>
        <begin position="676"/>
        <end position="694"/>
    </location>
</feature>
<feature type="strand" evidence="69">
    <location>
        <begin position="701"/>
        <end position="709"/>
    </location>
</feature>
<feature type="strand" evidence="68">
    <location>
        <begin position="710"/>
        <end position="712"/>
    </location>
</feature>
<feature type="strand" evidence="69">
    <location>
        <begin position="715"/>
        <end position="719"/>
    </location>
</feature>
<feature type="helix" evidence="69">
    <location>
        <begin position="720"/>
        <end position="722"/>
    </location>
</feature>
<feature type="turn" evidence="69">
    <location>
        <begin position="725"/>
        <end position="728"/>
    </location>
</feature>
<feature type="strand" evidence="69">
    <location>
        <begin position="734"/>
        <end position="736"/>
    </location>
</feature>
<feature type="strand" evidence="69">
    <location>
        <begin position="738"/>
        <end position="741"/>
    </location>
</feature>
<feature type="strand" evidence="69">
    <location>
        <begin position="743"/>
        <end position="745"/>
    </location>
</feature>
<feature type="strand" evidence="69">
    <location>
        <begin position="747"/>
        <end position="751"/>
    </location>
</feature>
<feature type="strand" evidence="71">
    <location>
        <begin position="757"/>
        <end position="759"/>
    </location>
</feature>
<feature type="strand" evidence="69">
    <location>
        <begin position="763"/>
        <end position="770"/>
    </location>
</feature>
<feature type="helix" evidence="69">
    <location>
        <begin position="776"/>
        <end position="786"/>
    </location>
</feature>
<feature type="strand" evidence="70">
    <location>
        <begin position="793"/>
        <end position="795"/>
    </location>
</feature>
<feature type="helix" evidence="69">
    <location>
        <begin position="801"/>
        <end position="816"/>
    </location>
</feature>
<feature type="turn" evidence="69">
    <location>
        <begin position="817"/>
        <end position="820"/>
    </location>
</feature>
<feature type="turn" evidence="75">
    <location>
        <begin position="831"/>
        <end position="833"/>
    </location>
</feature>
<feature type="helix" evidence="69">
    <location>
        <begin position="837"/>
        <end position="846"/>
    </location>
</feature>
<feature type="turn" evidence="69">
    <location>
        <begin position="850"/>
        <end position="854"/>
    </location>
</feature>
<accession>Q9UKV8</accession>
<accession>Q8TCZ5</accession>
<accession>Q8WV58</accession>
<accession>Q96ID1</accession>
<organism>
    <name type="scientific">Homo sapiens</name>
    <name type="common">Human</name>
    <dbReference type="NCBI Taxonomy" id="9606"/>
    <lineage>
        <taxon>Eukaryota</taxon>
        <taxon>Metazoa</taxon>
        <taxon>Chordata</taxon>
        <taxon>Craniata</taxon>
        <taxon>Vertebrata</taxon>
        <taxon>Euteleostomi</taxon>
        <taxon>Mammalia</taxon>
        <taxon>Eutheria</taxon>
        <taxon>Euarchontoglires</taxon>
        <taxon>Primates</taxon>
        <taxon>Haplorrhini</taxon>
        <taxon>Catarrhini</taxon>
        <taxon>Hominidae</taxon>
        <taxon>Homo</taxon>
    </lineage>
</organism>
<keyword id="KW-0002">3D-structure</keyword>
<keyword id="KW-0025">Alternative splicing</keyword>
<keyword id="KW-0963">Cytoplasm</keyword>
<keyword id="KW-0225">Disease variant</keyword>
<keyword id="KW-0255">Endonuclease</keyword>
<keyword id="KW-0945">Host-virus interaction</keyword>
<keyword id="KW-0378">Hydrolase</keyword>
<keyword id="KW-0379">Hydroxylation</keyword>
<keyword id="KW-0991">Intellectual disability</keyword>
<keyword id="KW-0460">Magnesium</keyword>
<keyword id="KW-0464">Manganese</keyword>
<keyword id="KW-0479">Metal-binding</keyword>
<keyword id="KW-0944">Nitration</keyword>
<keyword id="KW-0540">Nuclease</keyword>
<keyword id="KW-0539">Nucleus</keyword>
<keyword id="KW-0597">Phosphoprotein</keyword>
<keyword id="KW-1267">Proteomics identification</keyword>
<keyword id="KW-1185">Reference proteome</keyword>
<keyword id="KW-0678">Repressor</keyword>
<keyword id="KW-0687">Ribonucleoprotein</keyword>
<keyword id="KW-0694">RNA-binding</keyword>
<keyword id="KW-0943">RNA-mediated gene silencing</keyword>
<keyword id="KW-0804">Transcription</keyword>
<keyword id="KW-0805">Transcription regulation</keyword>
<keyword id="KW-0810">Translation regulation</keyword>
<keyword id="KW-0832">Ubl conjugation</keyword>
<gene>
    <name evidence="63" type="primary">AGO2</name>
    <name type="synonym">EIF2C2</name>
</gene>
<name>AGO2_HUMAN</name>
<protein>
    <recommendedName>
        <fullName evidence="3">Protein argonaute-2</fullName>
        <shortName evidence="3">Argonaute2</shortName>
        <shortName>hAgo2</shortName>
        <ecNumber evidence="3 9 46">3.1.26.n2</ecNumber>
    </recommendedName>
    <alternativeName>
        <fullName>Argonaute RISC catalytic component 2</fullName>
    </alternativeName>
    <alternativeName>
        <fullName evidence="3">Eukaryotic translation initiation factor 2C 2</fullName>
        <shortName evidence="3">eIF-2C 2</shortName>
        <shortName evidence="3">eIF2C 2</shortName>
    </alternativeName>
    <alternativeName>
        <fullName>PAZ Piwi domain protein</fullName>
        <shortName>PPD</shortName>
    </alternativeName>
    <alternativeName>
        <fullName evidence="3">Protein slicer</fullName>
    </alternativeName>
</protein>
<evidence type="ECO:0000250" key="1">
    <source>
        <dbReference type="UniProtKB" id="Q8CJG0"/>
    </source>
</evidence>
<evidence type="ECO:0000255" key="2"/>
<evidence type="ECO:0000255" key="3">
    <source>
        <dbReference type="HAMAP-Rule" id="MF_03031"/>
    </source>
</evidence>
<evidence type="ECO:0000255" key="4">
    <source>
        <dbReference type="PROSITE-ProRule" id="PRU00142"/>
    </source>
</evidence>
<evidence type="ECO:0000256" key="5">
    <source>
        <dbReference type="SAM" id="MobiDB-lite"/>
    </source>
</evidence>
<evidence type="ECO:0000269" key="6">
    <source>
    </source>
</evidence>
<evidence type="ECO:0000269" key="7">
    <source>
    </source>
</evidence>
<evidence type="ECO:0000269" key="8">
    <source>
    </source>
</evidence>
<evidence type="ECO:0000269" key="9">
    <source>
    </source>
</evidence>
<evidence type="ECO:0000269" key="10">
    <source>
    </source>
</evidence>
<evidence type="ECO:0000269" key="11">
    <source>
    </source>
</evidence>
<evidence type="ECO:0000269" key="12">
    <source>
    </source>
</evidence>
<evidence type="ECO:0000269" key="13">
    <source>
    </source>
</evidence>
<evidence type="ECO:0000269" key="14">
    <source>
    </source>
</evidence>
<evidence type="ECO:0000269" key="15">
    <source>
    </source>
</evidence>
<evidence type="ECO:0000269" key="16">
    <source>
    </source>
</evidence>
<evidence type="ECO:0000269" key="17">
    <source>
    </source>
</evidence>
<evidence type="ECO:0000269" key="18">
    <source>
    </source>
</evidence>
<evidence type="ECO:0000269" key="19">
    <source>
    </source>
</evidence>
<evidence type="ECO:0000269" key="20">
    <source>
    </source>
</evidence>
<evidence type="ECO:0000269" key="21">
    <source>
    </source>
</evidence>
<evidence type="ECO:0000269" key="22">
    <source>
    </source>
</evidence>
<evidence type="ECO:0000269" key="23">
    <source>
    </source>
</evidence>
<evidence type="ECO:0000269" key="24">
    <source>
    </source>
</evidence>
<evidence type="ECO:0000269" key="25">
    <source>
    </source>
</evidence>
<evidence type="ECO:0000269" key="26">
    <source>
    </source>
</evidence>
<evidence type="ECO:0000269" key="27">
    <source>
    </source>
</evidence>
<evidence type="ECO:0000269" key="28">
    <source>
    </source>
</evidence>
<evidence type="ECO:0000269" key="29">
    <source>
    </source>
</evidence>
<evidence type="ECO:0000269" key="30">
    <source>
    </source>
</evidence>
<evidence type="ECO:0000269" key="31">
    <source>
    </source>
</evidence>
<evidence type="ECO:0000269" key="32">
    <source>
    </source>
</evidence>
<evidence type="ECO:0000269" key="33">
    <source>
    </source>
</evidence>
<evidence type="ECO:0000269" key="34">
    <source>
    </source>
</evidence>
<evidence type="ECO:0000269" key="35">
    <source>
    </source>
</evidence>
<evidence type="ECO:0000269" key="36">
    <source>
    </source>
</evidence>
<evidence type="ECO:0000269" key="37">
    <source>
    </source>
</evidence>
<evidence type="ECO:0000269" key="38">
    <source>
    </source>
</evidence>
<evidence type="ECO:0000269" key="39">
    <source>
    </source>
</evidence>
<evidence type="ECO:0000269" key="40">
    <source>
    </source>
</evidence>
<evidence type="ECO:0000269" key="41">
    <source>
    </source>
</evidence>
<evidence type="ECO:0000269" key="42">
    <source>
    </source>
</evidence>
<evidence type="ECO:0000269" key="43">
    <source>
    </source>
</evidence>
<evidence type="ECO:0000269" key="44">
    <source>
    </source>
</evidence>
<evidence type="ECO:0000269" key="45">
    <source>
    </source>
</evidence>
<evidence type="ECO:0000269" key="46">
    <source>
    </source>
</evidence>
<evidence type="ECO:0000269" key="47">
    <source>
    </source>
</evidence>
<evidence type="ECO:0000269" key="48">
    <source>
    </source>
</evidence>
<evidence type="ECO:0000269" key="49">
    <source>
    </source>
</evidence>
<evidence type="ECO:0000269" key="50">
    <source>
    </source>
</evidence>
<evidence type="ECO:0000269" key="51">
    <source>
    </source>
</evidence>
<evidence type="ECO:0000269" key="52">
    <source>
    </source>
</evidence>
<evidence type="ECO:0000269" key="53">
    <source>
    </source>
</evidence>
<evidence type="ECO:0000269" key="54">
    <source>
    </source>
</evidence>
<evidence type="ECO:0000269" key="55">
    <source>
    </source>
</evidence>
<evidence type="ECO:0000269" key="56">
    <source>
    </source>
</evidence>
<evidence type="ECO:0000269" key="57">
    <source>
    </source>
</evidence>
<evidence type="ECO:0000269" key="58">
    <source>
    </source>
</evidence>
<evidence type="ECO:0000269" key="59">
    <source>
    </source>
</evidence>
<evidence type="ECO:0000269" key="60">
    <source>
    </source>
</evidence>
<evidence type="ECO:0000303" key="61">
    <source>
    </source>
</evidence>
<evidence type="ECO:0000305" key="62"/>
<evidence type="ECO:0000312" key="63">
    <source>
        <dbReference type="HGNC" id="HGNC:3263"/>
    </source>
</evidence>
<evidence type="ECO:0007744" key="64">
    <source>
    </source>
</evidence>
<evidence type="ECO:0007829" key="65">
    <source>
        <dbReference type="PDB" id="4F3T"/>
    </source>
</evidence>
<evidence type="ECO:0007829" key="66">
    <source>
        <dbReference type="PDB" id="4OLB"/>
    </source>
</evidence>
<evidence type="ECO:0007829" key="67">
    <source>
        <dbReference type="PDB" id="4W5N"/>
    </source>
</evidence>
<evidence type="ECO:0007829" key="68">
    <source>
        <dbReference type="PDB" id="4W5Q"/>
    </source>
</evidence>
<evidence type="ECO:0007829" key="69">
    <source>
        <dbReference type="PDB" id="4Z4D"/>
    </source>
</evidence>
<evidence type="ECO:0007829" key="70">
    <source>
        <dbReference type="PDB" id="5KI6"/>
    </source>
</evidence>
<evidence type="ECO:0007829" key="71">
    <source>
        <dbReference type="PDB" id="6CBD"/>
    </source>
</evidence>
<evidence type="ECO:0007829" key="72">
    <source>
        <dbReference type="PDB" id="6RA4"/>
    </source>
</evidence>
<evidence type="ECO:0007829" key="73">
    <source>
        <dbReference type="PDB" id="7KI3"/>
    </source>
</evidence>
<evidence type="ECO:0007829" key="74">
    <source>
        <dbReference type="PDB" id="8D6J"/>
    </source>
</evidence>
<evidence type="ECO:0007829" key="75">
    <source>
        <dbReference type="PDB" id="9CMP"/>
    </source>
</evidence>
<comment type="function">
    <text evidence="1 3 9 10 11 12 15 17 18 19 20 21 23 24 25 26 27 28 29 30 31 32 33 34 46 60">Required for RNA-mediated gene silencing (RNAi) by the RNA-induced silencing complex (RISC). The 'minimal RISC' appears to include AGO2 bound to a short guide RNA such as a microRNA (miRNA) or short interfering RNA (siRNA). These guide RNAs direct RISC to complementary mRNAs that are targets for RISC-mediated gene silencing. The precise mechanism of gene silencing depends on the degree of complementarity between the miRNA or siRNA and its target. Binding of RISC to a perfectly complementary mRNA generally results in silencing due to endonucleolytic cleavage of the mRNA specifically by AGO2. Binding of RISC to a partially complementary mRNA results in silencing through inhibition of translation, and this is independent of endonuclease activity. May inhibit translation initiation by binding to the 7-methylguanosine cap, thereby preventing the recruitment of the translation initiation factor eIF4-E. May also inhibit translation initiation via interaction with EIF6, which itself binds to the 60S ribosomal subunit and prevents its association with the 40S ribosomal subunit. The inhibition of translational initiation leads to the accumulation of the affected mRNA in cytoplasmic processing bodies (P-bodies), where mRNA degradation may subsequently occur. In some cases RISC-mediated translational repression is also observed for miRNAs that perfectly match the 3' untranslated region (3'-UTR). Can also up-regulate the translation of specific mRNAs under certain growth conditions. Binds to the AU element of the 3'-UTR of the TNF (TNF-alpha) mRNA and up-regulates translation under conditions of serum starvation. Also required for transcriptional gene silencing (TGS), in which short RNAs known as antigene RNAs or agRNAs direct the transcriptional repression of complementary promoter regions.</text>
</comment>
<comment type="function">
    <text evidence="59">(Microbial infection) Upon Sars-CoV-2 infection, associates with viral miRNA-like small RNA, CoV2-miR-O7a, and may repress mRNAs, such as BATF2, to evade the IFN response.</text>
</comment>
<comment type="catalytic activity">
    <reaction evidence="3 9 46">
        <text>Endonucleolytic cleavage to 5'-phosphomonoester.</text>
        <dbReference type="EC" id="3.1.26.n2"/>
    </reaction>
</comment>
<comment type="cofactor">
    <cofactor evidence="11">
        <name>Mg(2+)</name>
        <dbReference type="ChEBI" id="CHEBI:18420"/>
    </cofactor>
    <cofactor evidence="11">
        <name>Mn(2+)</name>
        <dbReference type="ChEBI" id="CHEBI:29035"/>
    </cofactor>
</comment>
<comment type="activity regulation">
    <text evidence="11">Inhibited by EDTA.</text>
</comment>
<comment type="biophysicochemical properties">
    <kinetics>
        <KM evidence="9 15">1.1 nM for a synthetic 21-nucleotide single-stranded RNA</KM>
    </kinetics>
</comment>
<comment type="subunit">
    <text evidence="1 3 6 7 8 12 13 16 17 19 20 21 22 23 25 26 28 29 31 32 34 35 36 37 38 39 40 41 42 43 44 47 48 49 51 52 60">Interacts with DICER1 through its Piwi domain and with TARBP2 during assembly of the RNA-induced silencing complex (RISC) (PubMed:14749716, PubMed:15973356, PubMed:16271387, PubMed:16289642, PubMed:16357216, PubMed:17507929, PubMed:18178619, PubMed:18690212, PubMed:33199684). Together, DICER1, AGO2 and TARBP2 constitute the trimeric RISC loading complex (RLC), or micro-RNA (miRNA) loading complex (miRLC). Within the RLC/miRLC, DICER1 and TARBP2 are required to process precursor miRNAs (pre-miRNAs) to mature miRNAs and then load them onto AGO2. AGO2 bound to the mature miRNA constitutes the minimal RISC and may subsequently dissociate from DICER1 and TARBP2. Note however that the term RISC has also been used to describe the trimeric RLC/miRLC. The formation of RISC complexes containing siRNAs rather than miRNAs appears to occur independently of DICER1. Interacts with AGO1. Also interacts with DDB1, DDX5, DDX6, DDX20, DHX30, DHX36, DDX47, DHX9, ELAVL, FXR1, GEMIN4, HNRNPF, IGF2BP1, ILF3, IMP8, MATR3, PABPC1, PRMT5, P4HA1, P4HB, RBM4, SART3, TNRC6A, TNRC6B, UPF1 and YBX1. Interacts with the P-body components DCP1A and XRN1. Associates with polysomes and messenger ribonucleoproteins (mNRPs). Interacts with RBM4; the interaction is modulated under stress-induced conditions, occurs under both cell proliferation and differentiation conditions and in an RNA- and phosphorylation-independent manner. Interacts with LIMD1, WTIP and AJUBA. Interacts with TRIM71; the interaction increases in presence of RNA (PubMed:23125361). Interacts with APOBEC3G in an RNA-dependent manner. Interacts with APOBEC3A, APOBEC3C, APOBEC3F and APOBEC3H. Interacts with DICER1, TARBP2, EIF6, MOV10 and RPL7A (60S ribosome subunit); they form a large RNA-induced silencing complex (RISC) (PubMed:17507929, PubMed:24726324). Interacts with FMR1 (PubMed:14703574). Interacts with ZFP36 (PubMed:15766526). Found in a complex, composed of AGO2, CHD7 and ARB2A (By similarity). Interacts with RC3H1; the interaction is RNA independent (PubMed:25697406). Interacts with SND1 (PubMed:14508492, PubMed:28546213). Interacts with SYT11 (By similarity). Interacts with CLNK (PubMed:26009488). Interacts with GARRE1 (PubMed:29395067). Interacts with GRB2; this interaction is important for the formation of a ternary complex containing GRB2, AGO2 and DICER1 (PubMed:37328606).</text>
</comment>
<comment type="subunit">
    <text evidence="55">(Microbial infection) Interacts with Epstein-Barr virus (EBV) tegument protein BGLF2; this interaction participates in the regulation of cellular miRNA by the virus, leading to enhanced SUMOylation.</text>
</comment>
<comment type="subunit">
    <text evidence="53">(Microbial infection) Interacts with rotavirus A non-structural protein 5; this interaction probably plays a role in the sequestration of AGO2 in viral factories.</text>
</comment>
<comment type="subunit">
    <text evidence="54">(Microbial infection) Interacts with human herpesvirus 8 protein MTA/ORF57; this interaction inhibits P-body formation.</text>
</comment>
<comment type="interaction">
    <interactant intactId="EBI-528269">
        <id>Q9UKV8</id>
    </interactant>
    <interactant intactId="EBI-527363">
        <id>Q9UL18</id>
        <label>AGO1</label>
    </interactant>
    <organismsDiffer>false</organismsDiffer>
    <experiments>7</experiments>
</comment>
<comment type="interaction">
    <interactant intactId="EBI-528269">
        <id>Q9UKV8</id>
    </interactant>
    <interactant intactId="EBI-2105113">
        <id>Q9UIV1</id>
        <label>CNOT7</label>
    </interactant>
    <organismsDiffer>false</organismsDiffer>
    <experiments>2</experiments>
</comment>
<comment type="interaction">
    <interactant intactId="EBI-528269">
        <id>Q9UKV8</id>
    </interactant>
    <interactant intactId="EBI-351257">
        <id>P26196</id>
        <label>DDX6</label>
    </interactant>
    <organismsDiffer>false</organismsDiffer>
    <experiments>15</experiments>
</comment>
<comment type="interaction">
    <interactant intactId="EBI-528269">
        <id>Q9UKV8</id>
    </interactant>
    <interactant intactId="EBI-744193">
        <id>Q96C10</id>
        <label>DHX58</label>
    </interactant>
    <organismsDiffer>false</organismsDiffer>
    <experiments>2</experiments>
</comment>
<comment type="interaction">
    <interactant intactId="EBI-528269">
        <id>Q9UKV8</id>
    </interactant>
    <interactant intactId="EBI-395506">
        <id>Q9UPY3</id>
        <label>DICER1</label>
    </interactant>
    <organismsDiffer>false</organismsDiffer>
    <experiments>21</experiments>
</comment>
<comment type="interaction">
    <interactant intactId="EBI-528269">
        <id>Q9UKV8</id>
    </interactant>
    <interactant intactId="EBI-15569571">
        <id>Q9UPY3-1</id>
        <label>DICER1</label>
    </interactant>
    <organismsDiffer>false</organismsDiffer>
    <experiments>14</experiments>
</comment>
<comment type="interaction">
    <interactant intactId="EBI-528269">
        <id>Q9UKV8</id>
    </interactant>
    <interactant intactId="EBI-10976677">
        <id>G5E9A7</id>
        <label>DMWD</label>
    </interactant>
    <organismsDiffer>false</organismsDiffer>
    <experiments>3</experiments>
</comment>
<comment type="interaction">
    <interactant intactId="EBI-528269">
        <id>Q9UKV8</id>
    </interactant>
    <interactant intactId="EBI-297353">
        <id>P00533</id>
        <label>EGFR</label>
    </interactant>
    <organismsDiffer>false</organismsDiffer>
    <experiments>11</experiments>
</comment>
<comment type="interaction">
    <interactant intactId="EBI-528269">
        <id>Q9UKV8</id>
    </interactant>
    <interactant intactId="EBI-74090">
        <id>Q13541</id>
        <label>EIF4EBP1</label>
    </interactant>
    <organismsDiffer>false</organismsDiffer>
    <experiments>2</experiments>
</comment>
<comment type="interaction">
    <interactant intactId="EBI-528269">
        <id>Q9UKV8</id>
    </interactant>
    <interactant intactId="EBI-348399">
        <id>P22607</id>
        <label>FGFR3</label>
    </interactant>
    <organismsDiffer>false</organismsDiffer>
    <experiments>3</experiments>
</comment>
<comment type="interaction">
    <interactant intactId="EBI-528269">
        <id>Q9UKV8</id>
    </interactant>
    <interactant intactId="EBI-1047444">
        <id>Q02790</id>
        <label>FKBP4</label>
    </interactant>
    <organismsDiffer>false</organismsDiffer>
    <experiments>2</experiments>
</comment>
<comment type="interaction">
    <interactant intactId="EBI-528269">
        <id>Q9UKV8</id>
    </interactant>
    <interactant intactId="EBI-641642">
        <id>Q9BVP2</id>
        <label>GNL3</label>
    </interactant>
    <organismsDiffer>false</organismsDiffer>
    <experiments>3</experiments>
</comment>
<comment type="interaction">
    <interactant intactId="EBI-528269">
        <id>Q9UKV8</id>
    </interactant>
    <interactant intactId="EBI-358808">
        <id>O15397</id>
        <label>IPO8</label>
    </interactant>
    <organismsDiffer>false</organismsDiffer>
    <experiments>4</experiments>
</comment>
<comment type="interaction">
    <interactant intactId="EBI-528269">
        <id>Q9UKV8</id>
    </interactant>
    <interactant intactId="EBI-2652871">
        <id>Q9UGP4</id>
        <label>LIMD1</label>
    </interactant>
    <organismsDiffer>false</organismsDiffer>
    <experiments>11</experiments>
</comment>
<comment type="interaction">
    <interactant intactId="EBI-528269">
        <id>Q9UKV8</id>
    </interactant>
    <interactant intactId="EBI-5323863">
        <id>Q5S007</id>
        <label>LRRK2</label>
    </interactant>
    <organismsDiffer>false</organismsDiffer>
    <experiments>3</experiments>
</comment>
<comment type="interaction">
    <interactant intactId="EBI-528269">
        <id>Q9UKV8</id>
    </interactant>
    <interactant intactId="EBI-1046588">
        <id>Q86UE4</id>
        <label>MTDH</label>
    </interactant>
    <organismsDiffer>false</organismsDiffer>
    <experiments>3</experiments>
</comment>
<comment type="interaction">
    <interactant intactId="EBI-528269">
        <id>Q9UKV8</id>
    </interactant>
    <interactant intactId="EBI-2125301">
        <id>Q6IQ23</id>
        <label>PLEKHA7</label>
    </interactant>
    <organismsDiffer>false</organismsDiffer>
    <experiments>7</experiments>
</comment>
<comment type="interaction">
    <interactant intactId="EBI-528269">
        <id>Q9UKV8</id>
    </interactant>
    <interactant intactId="EBI-713955">
        <id>O75569</id>
        <label>PRKRA</label>
    </interactant>
    <organismsDiffer>false</organismsDiffer>
    <experiments>5</experiments>
</comment>
<comment type="interaction">
    <interactant intactId="EBI-528269">
        <id>Q9UKV8</id>
    </interactant>
    <interactant intactId="EBI-977302">
        <id>P04156</id>
        <label>PRNP</label>
    </interactant>
    <organismsDiffer>false</organismsDiffer>
    <experiments>4</experiments>
</comment>
<comment type="interaction">
    <interactant intactId="EBI-528269">
        <id>Q9UKV8</id>
    </interactant>
    <interactant intactId="EBI-1049387">
        <id>Q15185</id>
        <label>PTGES3</label>
    </interactant>
    <organismsDiffer>false</organismsDiffer>
    <experiments>3</experiments>
</comment>
<comment type="interaction">
    <interactant intactId="EBI-528269">
        <id>Q9UKV8</id>
    </interactant>
    <interactant intactId="EBI-296739">
        <id>P63244</id>
        <label>RACK1</label>
    </interactant>
    <organismsDiffer>false</organismsDiffer>
    <experiments>2</experiments>
</comment>
<comment type="interaction">
    <interactant intactId="EBI-528269">
        <id>Q9UKV8</id>
    </interactant>
    <interactant intactId="EBI-491274">
        <id>P06400</id>
        <label>RB1</label>
    </interactant>
    <organismsDiffer>false</organismsDiffer>
    <experiments>3</experiments>
</comment>
<comment type="interaction">
    <interactant intactId="EBI-528269">
        <id>Q9UKV8</id>
    </interactant>
    <interactant intactId="EBI-5235340">
        <id>Q7Z699</id>
        <label>SPRED1</label>
    </interactant>
    <organismsDiffer>false</organismsDiffer>
    <experiments>3</experiments>
</comment>
<comment type="interaction">
    <interactant intactId="EBI-528269">
        <id>Q9UKV8</id>
    </interactant>
    <interactant intactId="EBI-978581">
        <id>Q15633</id>
        <label>TARBP2</label>
    </interactant>
    <organismsDiffer>false</organismsDiffer>
    <experiments>12</experiments>
</comment>
<comment type="interaction">
    <interactant intactId="EBI-528269">
        <id>Q9UKV8</id>
    </interactant>
    <interactant intactId="EBI-356402">
        <id>Q9UHD2</id>
        <label>TBK1</label>
    </interactant>
    <organismsDiffer>false</organismsDiffer>
    <experiments>2</experiments>
</comment>
<comment type="interaction">
    <interactant intactId="EBI-528269">
        <id>Q9UKV8</id>
    </interactant>
    <interactant intactId="EBI-359969">
        <id>A7MCY6</id>
        <label>TBKBP1</label>
    </interactant>
    <organismsDiffer>false</organismsDiffer>
    <experiments>2</experiments>
</comment>
<comment type="interaction">
    <interactant intactId="EBI-528269">
        <id>Q9UKV8</id>
    </interactant>
    <interactant intactId="EBI-2269715">
        <id>Q8NDV7</id>
        <label>TNRC6A</label>
    </interactant>
    <organismsDiffer>false</organismsDiffer>
    <experiments>23</experiments>
</comment>
<comment type="interaction">
    <interactant intactId="EBI-528269">
        <id>Q9UKV8</id>
    </interactant>
    <interactant intactId="EBI-947158">
        <id>Q9UPQ9</id>
        <label>TNRC6B</label>
    </interactant>
    <organismsDiffer>false</organismsDiffer>
    <experiments>14</experiments>
</comment>
<comment type="interaction">
    <interactant intactId="EBI-528269">
        <id>Q9UKV8</id>
    </interactant>
    <interactant intactId="EBI-6514011">
        <id>Q9UPQ9-2</id>
        <label>TNRC6B</label>
    </interactant>
    <organismsDiffer>false</organismsDiffer>
    <experiments>4</experiments>
</comment>
<comment type="interaction">
    <interactant intactId="EBI-528269">
        <id>Q9UKV8</id>
    </interactant>
    <interactant intactId="EBI-6507625">
        <id>Q9HCJ0</id>
        <label>TNRC6C</label>
    </interactant>
    <organismsDiffer>false</organismsDiffer>
    <experiments>5</experiments>
</comment>
<comment type="interaction">
    <interactant intactId="EBI-528269">
        <id>Q9UKV8</id>
    </interactant>
    <interactant intactId="EBI-2548480">
        <id>Q9HA38</id>
        <label>ZMAT3</label>
    </interactant>
    <organismsDiffer>false</organismsDiffer>
    <experiments>5</experiments>
</comment>
<comment type="subcellular location">
    <subcellularLocation>
        <location evidence="44 45 54 58">Cytoplasm</location>
        <location evidence="44 45 54 58">P-body</location>
    </subcellularLocation>
    <subcellularLocation>
        <location evidence="44">Nucleus</location>
    </subcellularLocation>
    <text>Translational repression of mRNAs results in their recruitment to P-bodies. Translocation to the nucleus requires IMP8.</text>
</comment>
<comment type="alternative products">
    <event type="alternative splicing"/>
    <isoform>
        <id>Q9UKV8-1</id>
        <name>1</name>
        <sequence type="displayed"/>
    </isoform>
    <isoform>
        <id>Q9UKV8-2</id>
        <name>2</name>
        <sequence type="described" ref="VSP_037001"/>
    </isoform>
</comment>
<comment type="domain">
    <text>The Piwi domain may perform RNA cleavage by a mechanism similar to that of RNase H. However, while RNase H utilizes a triad of Asp-Asp-Glu (DDE) for metal ion coordination, this protein appears to utilize a triad of Asp-Asp-His (DDH).</text>
</comment>
<comment type="PTM">
    <text evidence="3 32">Hydroxylated. 4-hydroxylation appears to enhance protein stability but is not required for miRNA-binding or endonuclease activity.</text>
</comment>
<comment type="PTM">
    <text evidence="56 57">Ubiquitinated on surface-exposed lysines by a SCF-like E3 ubiquitin-protein ligase complex containing ZSWIM8 during target-directed microRNA degradation (TDMD), a process that mediates degradation of microRNAs (miRNAs) (PubMed:33184234, PubMed:33184237). Ubiquitination by the SCF-like E3 ubiquitin-protein ligase complex containing ZSWIM8 leads to its subsequent degradation, thereby exposing miRNAs for degradation (PubMed:33184234, PubMed:33184237). ZSWIM8 recognizes and binds AGO2 when it is engaged with a TDMD target (PubMed:33184237).</text>
</comment>
<comment type="PTM">
    <text evidence="50">Phosphorylated. A phosphorylation cycle of C-terminal serine cluster (Ser-824-Ser-834) regulates the release of target mRNAs. Target-binding leads to phosphorylation of these residues by CSNK1A1, which reduces the affinity of AGO2 for mRNA and enables target release. The ANKRD52-PPP6C phosphatase complex dephosphorylates the residues, which primes AGO2 for binding a new target.</text>
</comment>
<comment type="PTM">
    <text evidence="45">Phosphorylation at Ser-387 by AKT3; leads to up-regulate translational repression of microRNA target and down-regulate endonucleolytic cleavage.</text>
</comment>
<comment type="disease" evidence="58">
    <disease id="DI-06006">
        <name>Lessel-Kreienkamp syndrome</name>
        <acronym>LESKRES</acronym>
        <description>An autosomal dominant disorder characterized by global developmental delay, intellectual disability of variable degree, and speech and language delay apparent from infancy or early childhood. Behavioral disorders are observed in most patients. Additional variable features include seizures, hypotonia, gait abnormalities, visual and cardiac defects, and non-specific facial dysmorphism.</description>
        <dbReference type="MIM" id="619149"/>
    </disease>
    <text>The disease is caused by variants affecting the gene represented in this entry.</text>
</comment>
<comment type="similarity">
    <text evidence="3">Belongs to the argonaute family. Ago subfamily.</text>
</comment>
<comment type="sequence caution" evidence="62">
    <conflict type="erroneous initiation">
        <sequence resource="EMBL-CDS" id="AAH07633"/>
    </conflict>
    <text>Truncated N-terminus.</text>
</comment>
<comment type="sequence caution" evidence="62">
    <conflict type="miscellaneous discrepancy">
        <sequence resource="EMBL-CDS" id="AAL76093"/>
    </conflict>
    <text>cDNA contains a duplication of an internal sequence at the 5' end.</text>
</comment>
<reference key="1">
    <citation type="journal article" date="2006" name="Nature">
        <title>DNA sequence and analysis of human chromosome 8.</title>
        <authorList>
            <person name="Nusbaum C."/>
            <person name="Mikkelsen T.S."/>
            <person name="Zody M.C."/>
            <person name="Asakawa S."/>
            <person name="Taudien S."/>
            <person name="Garber M."/>
            <person name="Kodira C.D."/>
            <person name="Schueler M.G."/>
            <person name="Shimizu A."/>
            <person name="Whittaker C.A."/>
            <person name="Chang J.L."/>
            <person name="Cuomo C.A."/>
            <person name="Dewar K."/>
            <person name="FitzGerald M.G."/>
            <person name="Yang X."/>
            <person name="Allen N.R."/>
            <person name="Anderson S."/>
            <person name="Asakawa T."/>
            <person name="Blechschmidt K."/>
            <person name="Bloom T."/>
            <person name="Borowsky M.L."/>
            <person name="Butler J."/>
            <person name="Cook A."/>
            <person name="Corum B."/>
            <person name="DeArellano K."/>
            <person name="DeCaprio D."/>
            <person name="Dooley K.T."/>
            <person name="Dorris L. III"/>
            <person name="Engels R."/>
            <person name="Gloeckner G."/>
            <person name="Hafez N."/>
            <person name="Hagopian D.S."/>
            <person name="Hall J.L."/>
            <person name="Ishikawa S.K."/>
            <person name="Jaffe D.B."/>
            <person name="Kamat A."/>
            <person name="Kudoh J."/>
            <person name="Lehmann R."/>
            <person name="Lokitsang T."/>
            <person name="Macdonald P."/>
            <person name="Major J.E."/>
            <person name="Matthews C.D."/>
            <person name="Mauceli E."/>
            <person name="Menzel U."/>
            <person name="Mihalev A.H."/>
            <person name="Minoshima S."/>
            <person name="Murayama Y."/>
            <person name="Naylor J.W."/>
            <person name="Nicol R."/>
            <person name="Nguyen C."/>
            <person name="O'Leary S.B."/>
            <person name="O'Neill K."/>
            <person name="Parker S.C.J."/>
            <person name="Polley A."/>
            <person name="Raymond C.K."/>
            <person name="Reichwald K."/>
            <person name="Rodriguez J."/>
            <person name="Sasaki T."/>
            <person name="Schilhabel M."/>
            <person name="Siddiqui R."/>
            <person name="Smith C.L."/>
            <person name="Sneddon T.P."/>
            <person name="Talamas J.A."/>
            <person name="Tenzin P."/>
            <person name="Topham K."/>
            <person name="Venkataraman V."/>
            <person name="Wen G."/>
            <person name="Yamazaki S."/>
            <person name="Young S.K."/>
            <person name="Zeng Q."/>
            <person name="Zimmer A.R."/>
            <person name="Rosenthal A."/>
            <person name="Birren B.W."/>
            <person name="Platzer M."/>
            <person name="Shimizu N."/>
            <person name="Lander E.S."/>
        </authorList>
    </citation>
    <scope>NUCLEOTIDE SEQUENCE [LARGE SCALE GENOMIC DNA]</scope>
</reference>
<reference key="2">
    <citation type="journal article" date="2004" name="Genome Res.">
        <title>The status, quality, and expansion of the NIH full-length cDNA project: the Mammalian Gene Collection (MGC).</title>
        <authorList>
            <consortium name="The MGC Project Team"/>
        </authorList>
    </citation>
    <scope>NUCLEOTIDE SEQUENCE [LARGE SCALE MRNA] (ISOFORM 2)</scope>
    <scope>NUCLEOTIDE SEQUENCE [LARGE SCALE MRNA] OF 239-859 (ISOFORM 1)</scope>
    <source>
        <tissue>Brain</tissue>
        <tissue>Eye</tissue>
    </source>
</reference>
<reference key="3">
    <citation type="journal article" date="2002" name="Genes Dev.">
        <title>miRNPs: a novel class of ribonucleoproteins containing numerous microRNAs.</title>
        <authorList>
            <person name="Mourelatos Z."/>
            <person name="Dostie J."/>
            <person name="Paushkin S."/>
            <person name="Sharma A."/>
            <person name="Charroux B."/>
            <person name="Abel L."/>
            <person name="Rappsilber J."/>
            <person name="Mann M."/>
            <person name="Dreyfuss G."/>
        </authorList>
    </citation>
    <scope>NUCLEOTIDE SEQUENCE [MRNA] OF 47-859 (ISOFORM 1)</scope>
</reference>
<reference key="4">
    <citation type="submission" date="2003-05" db="EMBL/GenBank/DDBJ databases">
        <title>Cloning of human full-length CDSs in BD Creator(TM) system donor vector.</title>
        <authorList>
            <person name="Kalnine N."/>
            <person name="Chen X."/>
            <person name="Rolfs A."/>
            <person name="Halleck A."/>
            <person name="Hines L."/>
            <person name="Eisenstein S."/>
            <person name="Koundinya M."/>
            <person name="Raphael J."/>
            <person name="Moreira D."/>
            <person name="Kelley T."/>
            <person name="LaBaer J."/>
            <person name="Lin Y."/>
            <person name="Phelan M."/>
            <person name="Farmer A."/>
        </authorList>
    </citation>
    <scope>NUCLEOTIDE SEQUENCE [LARGE SCALE MRNA] OF 275-859 (ISOFORM 1)</scope>
</reference>
<reference key="5">
    <citation type="journal article" date="1999" name="Genomics">
        <title>Human eukaryotic initiation factor EIF2C1 gene: cDNA sequence, genomic organization, localization to chromosomal bands 1p34-p35, and expression.</title>
        <authorList>
            <person name="Koesters R."/>
            <person name="Adams V."/>
            <person name="Betts D."/>
            <person name="Moos R."/>
            <person name="Schmid M."/>
            <person name="Siermann A."/>
            <person name="Hassam S."/>
            <person name="Weitz S."/>
            <person name="Lichter P."/>
            <person name="Heitz P.U."/>
            <person name="von Knebel Doeberitz M."/>
            <person name="Briner J."/>
        </authorList>
    </citation>
    <scope>NUCLEOTIDE SEQUENCE [MRNA] OF 483-859 (ISOFORM 1)</scope>
</reference>
<reference key="6">
    <citation type="journal article" date="2003" name="Nature">
        <title>A micrococcal nuclease homologue in RNAi effector complexes.</title>
        <authorList>
            <person name="Caudy A.A."/>
            <person name="Ketting R.F."/>
            <person name="Hammond S.M."/>
            <person name="Denli A.M."/>
            <person name="Bathoorn A.M."/>
            <person name="Tops B.B."/>
            <person name="Silva J.M."/>
            <person name="Myers M.M."/>
            <person name="Hannon G.J."/>
            <person name="Plasterk R.H."/>
        </authorList>
    </citation>
    <scope>INTERACTION WITH SND1</scope>
</reference>
<reference key="7">
    <citation type="journal article" date="2004" name="EMBO Rep.">
        <title>Characterization of the interactions between mammalian PAZ PIWI domain proteins and Dicer.</title>
        <authorList>
            <person name="Tahbaz N."/>
            <person name="Kolb F.A."/>
            <person name="Zhang H."/>
            <person name="Jaronczyk K."/>
            <person name="Filipowicz W."/>
            <person name="Hobman T.C."/>
        </authorList>
    </citation>
    <scope>INTERACTION WITH DICER1</scope>
</reference>
<reference key="8">
    <citation type="journal article" date="2004" name="Genes Dev.">
        <title>RISC is a 5' phosphomonoester-producing RNA endonuclease.</title>
        <authorList>
            <person name="Martinez J."/>
            <person name="Tuschl T."/>
        </authorList>
    </citation>
    <scope>FUNCTION</scope>
    <scope>CATALYTIC ACTIVITY</scope>
    <scope>BIOPHYSICOCHEMICAL PROPERTIES</scope>
</reference>
<reference key="9">
    <citation type="journal article" date="2004" name="Mol. Cell">
        <title>Human Argonaute2 mediates RNA cleavage targeted by miRNAs and siRNAs.</title>
        <authorList>
            <person name="Meister G."/>
            <person name="Landthaler M."/>
            <person name="Patkaniowska A."/>
            <person name="Dorsett Y."/>
            <person name="Teng G."/>
            <person name="Tuschl T."/>
        </authorList>
    </citation>
    <scope>FUNCTION</scope>
</reference>
<reference key="10">
    <citation type="journal article" date="2004" name="Nat. Neurosci.">
        <title>Biochemical and genetic interaction between the fragile X mental retardation protein and the microRNA pathway.</title>
        <authorList>
            <person name="Jin P."/>
            <person name="Zarnescu D.C."/>
            <person name="Ceman S."/>
            <person name="Nakamoto M."/>
            <person name="Mowrey J."/>
            <person name="Jongens T.A."/>
            <person name="Nelson D.L."/>
            <person name="Moses K."/>
            <person name="Warren S.T."/>
        </authorList>
    </citation>
    <scope>INTERACTION WITH FMR1</scope>
</reference>
<reference key="11">
    <citation type="journal article" date="2004" name="RNA">
        <title>Tethering of human Ago proteins to mRNA mimics the miRNA-mediated repression of protein synthesis.</title>
        <authorList>
            <person name="Pillai R.S."/>
            <person name="Artus C.G."/>
            <person name="Filipowicz W."/>
        </authorList>
    </citation>
    <scope>FUNCTION</scope>
    <scope>INTERACTION WITH GEMIN4</scope>
</reference>
<reference key="12">
    <citation type="journal article" date="2004" name="Science">
        <title>Argonaute2 is the catalytic engine of mammalian RNAi.</title>
        <authorList>
            <person name="Liu J."/>
            <person name="Carmell M.A."/>
            <person name="Rivas F.V."/>
            <person name="Marsden C.G."/>
            <person name="Thomson J.M."/>
            <person name="Song J.-J."/>
            <person name="Hammond S.M."/>
            <person name="Joshua-Tor L."/>
            <person name="Hannon G.J."/>
        </authorList>
    </citation>
    <scope>FUNCTION</scope>
    <scope>ACTIVITY REGULATION</scope>
    <scope>MUTAGENESIS OF LEU-140; ASP-597; GLN-633; HIS-634; ASP-669; HIS-682; PHE-704 AND THR-744</scope>
    <scope>COFACTOR</scope>
</reference>
<reference key="13">
    <citation type="journal article" date="2005" name="Cell">
        <title>Involvement of microRNA in AU-rich element-mediated mRNA instability.</title>
        <authorList>
            <person name="Jing Q."/>
            <person name="Huang S."/>
            <person name="Guth S."/>
            <person name="Zarubin T."/>
            <person name="Motoyama A."/>
            <person name="Chen J."/>
            <person name="Di Padova F."/>
            <person name="Lin S.C."/>
            <person name="Gram H."/>
            <person name="Han J."/>
        </authorList>
    </citation>
    <scope>INTERACTION WITH ZFP36</scope>
</reference>
<reference key="14">
    <citation type="journal article" date="2005" name="Cell">
        <title>Human RISC couples microRNA biogenesis and posttranscriptional gene silencing.</title>
        <authorList>
            <person name="Gregory R.I."/>
            <person name="Chendrimada T.P."/>
            <person name="Cooch N."/>
            <person name="Shiekhattar R."/>
        </authorList>
    </citation>
    <scope>FUNCTION</scope>
    <scope>INTERACTION WITH DICER1 AND TARBP2</scope>
</reference>
<reference key="15">
    <citation type="journal article" date="2005" name="Curr. Biol.">
        <title>Identification of novel argonaute-associated proteins.</title>
        <authorList>
            <person name="Meister G."/>
            <person name="Landthaler M."/>
            <person name="Peters L."/>
            <person name="Chen P.Y."/>
            <person name="Urlaub H."/>
            <person name="Luehrmann R."/>
            <person name="Tuschl T."/>
        </authorList>
    </citation>
    <scope>FUNCTION</scope>
    <scope>INTERACTION WITH DDX20; DICER1; GEMIN4; MOV10; PRMT5 AND TNRC6B</scope>
    <scope>SUBCELLULAR LOCATION</scope>
</reference>
<reference key="16">
    <citation type="journal article" date="2005" name="EMBO Rep.">
        <title>TRBP, a regulator of cellular PKR and HIV-1 virus expression, interacts with Dicer and functions in RNA silencing.</title>
        <authorList>
            <person name="Haase A.D."/>
            <person name="Jaskiewicz L."/>
            <person name="Zhang H."/>
            <person name="Laine S."/>
            <person name="Sack R."/>
            <person name="Gatignol A."/>
            <person name="Filipowicz W."/>
        </authorList>
    </citation>
    <scope>FUNCTION</scope>
</reference>
<reference key="17">
    <citation type="journal article" date="2005" name="Genes Dev.">
        <title>A human, ATP-independent, RISC assembly machine fueled by pre-miRNA.</title>
        <authorList>
            <person name="Maniataki E."/>
            <person name="Mourelatos Z."/>
        </authorList>
    </citation>
    <scope>FUNCTION</scope>
    <scope>INTERACTION WITH DICER1 AND TARBP2</scope>
    <scope>MUTAGENESIS OF ASP-669</scope>
</reference>
<reference key="18">
    <citation type="journal article" date="2005" name="Nature">
        <title>Structural basis for 5'-end-specific recognition of guide RNA by the A. fulgidus Piwi protein.</title>
        <authorList>
            <person name="Ma J.-B."/>
            <person name="Yuan Y.-R."/>
            <person name="Meister G."/>
            <person name="Pei Y."/>
            <person name="Tuschl T."/>
            <person name="Patel D.J."/>
        </authorList>
    </citation>
    <scope>MUTAGENESIS OF LYS-533; GLN-545 AND LYS-570</scope>
</reference>
<reference key="19">
    <citation type="journal article" date="2005" name="Nature">
        <title>TRBP recruits the Dicer complex to Ago2 for microRNA processing and gene silencing.</title>
        <authorList>
            <person name="Chendrimada T.P."/>
            <person name="Gregory R.I."/>
            <person name="Kumaraswamy E."/>
            <person name="Norman J."/>
            <person name="Cooch N."/>
            <person name="Nishikura K."/>
            <person name="Shiekhattar R."/>
        </authorList>
    </citation>
    <scope>INTERACTION WITH DICER1 AND TARBP2</scope>
</reference>
<reference key="20">
    <citation type="journal article" date="2005" name="Nat. Cell Biol.">
        <title>Argonaute 2/RISC resides in sites of mammalian mRNA decay known as cytoplasmic bodies.</title>
        <authorList>
            <person name="Sen G.L."/>
            <person name="Blau H.M."/>
        </authorList>
    </citation>
    <scope>SUBCELLULAR LOCATION</scope>
</reference>
<reference key="21">
    <citation type="journal article" date="2005" name="Nat. Struct. Mol. Biol.">
        <title>Purified Argonaute2 and an siRNA form recombinant human RISC.</title>
        <authorList>
            <person name="Rivas F.V."/>
            <person name="Tolia N.H."/>
            <person name="Song J.-J."/>
            <person name="Aragon J.P."/>
            <person name="Liu J."/>
            <person name="Hannon G.J."/>
            <person name="Joshua-Tor L."/>
        </authorList>
    </citation>
    <scope>FUNCTION</scope>
    <scope>BIOPHYSICOCHEMICAL PROPERTIES</scope>
    <scope>MUTAGENESIS OF ASP-597; ASP-669; GLU-673; GLU-683 AND HIS-807</scope>
</reference>
<reference key="22">
    <citation type="journal article" date="2005" name="Science">
        <title>Inhibition of translational initiation by Let-7 MicroRNA in human cells.</title>
        <authorList>
            <person name="Pillai R.S."/>
            <person name="Bhattacharyya S.N."/>
            <person name="Artus C.G."/>
            <person name="Zoller T."/>
            <person name="Cougot N."/>
            <person name="Basyuk E."/>
            <person name="Bertrand E."/>
            <person name="Filipowicz W."/>
        </authorList>
    </citation>
    <scope>FUNCTION</scope>
    <scope>INTERACTION WITH DCP1A AND XRN1</scope>
    <scope>SUBCELLULAR LOCATION</scope>
</reference>
<reference key="23">
    <citation type="journal article" date="2006" name="Nat. Struct. Mol. Biol.">
        <title>Involvement of AGO1 and AGO2 in mammalian transcriptional silencing.</title>
        <authorList>
            <person name="Janowski B.A."/>
            <person name="Huffman K.E."/>
            <person name="Schwartz J.C."/>
            <person name="Ram R."/>
            <person name="Nordsell R."/>
            <person name="Shames D.S."/>
            <person name="Minna J.D."/>
            <person name="Corey D.R."/>
        </authorList>
    </citation>
    <scope>FUNCTION</scope>
</reference>
<reference key="24">
    <citation type="journal article" date="2006" name="PLoS Biol.">
        <title>Translation repression in human cells by microRNA-induced gene silencing requires RCK/p54.</title>
        <authorList>
            <person name="Chu C.-Y."/>
            <person name="Rana T.M."/>
        </authorList>
    </citation>
    <scope>FUNCTION</scope>
    <scope>INTERACTION WITH DDX6 AND AGO1</scope>
    <scope>SUBCELLULAR LOCATION</scope>
</reference>
<reference key="25">
    <citation type="journal article" date="2006" name="PLoS Pathog.">
        <title>Human retroviral host restriction factors APOBEC3G and APOBEC3F localize to mRNA processing bodies.</title>
        <authorList>
            <person name="Wichroski M.J."/>
            <person name="Robb G.B."/>
            <person name="Rana T.M."/>
        </authorList>
    </citation>
    <scope>INTERACTION WITH APOBEC3G</scope>
</reference>
<reference key="26">
    <citation type="journal article" date="2007" name="Cell">
        <title>AU-rich-element-mediated upregulation of translation by FXR1 and Argonaute 2.</title>
        <authorList>
            <person name="Vasudevan S."/>
            <person name="Steitz J.A."/>
        </authorList>
    </citation>
    <scope>FUNCTION</scope>
    <scope>INTERACTION WITH FXR1</scope>
    <scope>SUBCELLULAR LOCATION</scope>
</reference>
<reference key="27">
    <citation type="journal article" date="2007" name="Cell">
        <title>An mRNA m7G cap binding-like motif within human Ago2 represses translation.</title>
        <authorList>
            <person name="Kiriakidou M."/>
            <person name="Tan G.S."/>
            <person name="Lamprinaki S."/>
            <person name="De Planell-Saguer M."/>
            <person name="Nelson P.T."/>
            <person name="Mourelatos Z."/>
        </authorList>
    </citation>
    <scope>FUNCTION</scope>
    <scope>MUTAGENESIS OF PHE-470 AND PHE-505</scope>
</reference>
<reference key="28">
    <citation type="journal article" date="2007" name="EMBO Rep.">
        <title>Proteomic and functional analysis of Argonaute-containing mRNA-protein complexes in human cells.</title>
        <authorList>
            <person name="Hoeck J."/>
            <person name="Weinmann L."/>
            <person name="Ender C."/>
            <person name="Ruedel S."/>
            <person name="Kremmer E."/>
            <person name="Raabe M."/>
            <person name="Urlaub H."/>
            <person name="Meister G."/>
        </authorList>
    </citation>
    <scope>FUNCTION</scope>
    <scope>ASSOCIATION WITH POLYSOMES AND MNRP</scope>
    <scope>INTERACTION WITH DDB1; DDX5; DHX30; DHX36; DDX47; ELAVL1; HNRNPF; IGF2BP1; ILF3; MATR3; PABPC1; RBM4; SART3; UPF1 AND YBX1</scope>
</reference>
<reference key="29">
    <citation type="journal article" date="2007" name="Mol. Cell">
        <title>RNA helicase A interacts with RISC in human cells and functions in RISC loading.</title>
        <authorList>
            <person name="Robb G.B."/>
            <person name="Rana T.M."/>
        </authorList>
    </citation>
    <scope>FUNCTION</scope>
    <scope>INTERACTION WITH DHX9</scope>
</reference>
<reference key="30">
    <citation type="journal article" date="2007" name="Nature">
        <title>MicroRNA silencing through RISC recruitment of eIF6.</title>
        <authorList>
            <person name="Chendrimada T.P."/>
            <person name="Finn K.J."/>
            <person name="Ji X."/>
            <person name="Baillat D."/>
            <person name="Gregory R.I."/>
            <person name="Liebhaber S.A."/>
            <person name="Pasquinelli A.E."/>
            <person name="Shiekhattar R."/>
        </authorList>
    </citation>
    <scope>IDENTIFICATION BY MASS SPECTROMETRY</scope>
    <scope>FUNCTION</scope>
    <scope>INTERACTION WITH DICER1; EIF6; MOV10; RPL7A AND TARBP2</scope>
    <scope>ASSOCIATION WITH THE 60S RIBOSOME</scope>
</reference>
<reference key="31">
    <citation type="journal article" date="2007" name="Science">
        <title>Switching from repression to activation: microRNAs can up-regulate translation.</title>
        <authorList>
            <person name="Vasudevan S."/>
            <person name="Tong Y."/>
            <person name="Steitz J.A."/>
        </authorList>
    </citation>
    <scope>FUNCTION</scope>
</reference>
<reference key="32">
    <citation type="journal article" date="2008" name="Curr. Biol.">
        <title>Importance of translation and nonnucleolytic ago proteins for on-target RNA interference.</title>
        <authorList>
            <person name="Wu L."/>
            <person name="Fan J."/>
            <person name="Belasco J.G."/>
        </authorList>
    </citation>
    <scope>FUNCTION</scope>
    <scope>MUTAGENESIS OF ASP-597</scope>
</reference>
<reference key="33">
    <citation type="journal article" date="2008" name="Nature">
        <title>Prolyl 4-hydroxylation regulates Argonaute 2 stability.</title>
        <authorList>
            <person name="Qi H.H."/>
            <person name="Ongusaha P.P."/>
            <person name="Myllyharju J."/>
            <person name="Cheng D."/>
            <person name="Pakkanen O."/>
            <person name="Shi Y."/>
            <person name="Lee S.W."/>
            <person name="Peng J."/>
            <person name="Shi Y."/>
        </authorList>
    </citation>
    <scope>FUNCTION</scope>
    <scope>INTERACTION WITH DICER1; P4HA1; P4HB; TNRC6A AND TNRC6B</scope>
    <scope>SUBCELLULAR LOCATION</scope>
    <scope>HYDROXYLATION AT PRO-700</scope>
    <scope>MUTAGENESIS OF PRO-700</scope>
</reference>
<reference key="34">
    <citation type="journal article" date="2008" name="Proc. Natl. Acad. Sci. U.S.A.">
        <title>In vitro reconstitution of the human RISC-loading complex.</title>
        <authorList>
            <person name="MacRae I.J."/>
            <person name="Ma E."/>
            <person name="Zhou M."/>
            <person name="Robinson C.V."/>
            <person name="Doudna J.A."/>
        </authorList>
    </citation>
    <scope>FUNCTION</scope>
    <scope>INTERACTION WITH DICER1 AND TARBP2</scope>
</reference>
<reference key="35">
    <citation type="journal article" date="2009" name="Cell">
        <title>Importin 8 is a gene silencing factor that targets argonaute proteins to distinct mRNAs.</title>
        <authorList>
            <person name="Weinmann L."/>
            <person name="Hoeck J."/>
            <person name="Ivacevic T."/>
            <person name="Ohrt T."/>
            <person name="Muetze J."/>
            <person name="Schwille P."/>
            <person name="Kremmer E."/>
            <person name="Benes V."/>
            <person name="Urlaub H."/>
            <person name="Meister G."/>
        </authorList>
    </citation>
    <scope>FUNCTION</scope>
    <scope>INTERACTION WITH IMP8</scope>
    <scope>SUBCELLULAR LOCATION</scope>
</reference>
<reference key="36">
    <citation type="journal article" date="2009" name="J. Biol. Chem.">
        <title>RNA-binding motif protein 4 translocates to cytoplasmic granules and suppresses translation via argonaute2 during muscle cell differentiation.</title>
        <authorList>
            <person name="Lin J.C."/>
            <person name="Tarn W.Y."/>
        </authorList>
    </citation>
    <scope>INTERACTION WITH RBM4</scope>
</reference>
<reference key="37">
    <citation type="journal article" date="2010" name="Proc. Natl. Acad. Sci. U.S.A.">
        <title>LIM-domain proteins, LIMD1, Ajuba, and WTIP are required for microRNA-mediated gene silencing.</title>
        <authorList>
            <person name="James V."/>
            <person name="Zhang Y."/>
            <person name="Foxler D.E."/>
            <person name="de Moor C.H."/>
            <person name="Kong Y.W."/>
            <person name="Webb T.M."/>
            <person name="Self T.J."/>
            <person name="Feng Y."/>
            <person name="Lagos D."/>
            <person name="Chu C.Y."/>
            <person name="Rana T.M."/>
            <person name="Morley S.J."/>
            <person name="Longmore G.D."/>
            <person name="Bushell M."/>
            <person name="Sharp T.V."/>
        </authorList>
    </citation>
    <scope>SUBCELLULAR LOCATION</scope>
    <scope>INTERACTION WITH LIMD1; WTIP AND AJUBA</scope>
</reference>
<reference key="38">
    <citation type="journal article" date="2011" name="BMC Syst. Biol.">
        <title>Initial characterization of the human central proteome.</title>
        <authorList>
            <person name="Burkard T.R."/>
            <person name="Planyavsky M."/>
            <person name="Kaupe I."/>
            <person name="Breitwieser F.P."/>
            <person name="Buerckstuemmer T."/>
            <person name="Bennett K.L."/>
            <person name="Superti-Furga G."/>
            <person name="Colinge J."/>
        </authorList>
    </citation>
    <scope>IDENTIFICATION BY MASS SPECTROMETRY [LARGE SCALE ANALYSIS]</scope>
</reference>
<reference key="39">
    <citation type="journal article" date="2011" name="Mol. Cell">
        <title>GW182 proteins directly recruit cytoplasmic deadenylase complexes to miRNA targets.</title>
        <authorList>
            <person name="Braun J.E."/>
            <person name="Huntzinger E."/>
            <person name="Fauser M."/>
            <person name="Izaurralde E."/>
        </authorList>
    </citation>
    <scope>INTERACTION WITH TNRC6C</scope>
    <scope>MUTAGENESIS OF PHE-470 AND PHE-505</scope>
</reference>
<reference key="40">
    <citation type="journal article" date="2012" name="J. Biol. Chem.">
        <title>APOBEC3G inhibits microRNA-mediated repression of translation by interfering with the interaction between Argonaute-2 and MOV10.</title>
        <authorList>
            <person name="Liu C."/>
            <person name="Zhang X."/>
            <person name="Huang F."/>
            <person name="Yang B."/>
            <person name="Li J."/>
            <person name="Liu B."/>
            <person name="Luo H."/>
            <person name="Zhang P."/>
            <person name="Zhang H."/>
        </authorList>
    </citation>
    <scope>INTERACTION WITH MOV10</scope>
</reference>
<reference key="41">
    <citation type="journal article" date="2012" name="J. Virol.">
        <title>HIV-1 replication and APOBEC3 antiviral activity are not regulated by P bodies.</title>
        <authorList>
            <person name="Phalora P.K."/>
            <person name="Sherer N.M."/>
            <person name="Wolinsky S.M."/>
            <person name="Swanson C.M."/>
            <person name="Malim M.H."/>
        </authorList>
    </citation>
    <scope>SUBCELLULAR LOCATION</scope>
    <scope>INTERACTION WITH APOBEC3A; APOBEC3C; APOBEC3F; APOBEC3G AND APOBEC3H</scope>
</reference>
<reference key="42">
    <citation type="journal article" date="2013" name="Cell Rep.">
        <title>The making of a slicer: activation of human Argonaute-1.</title>
        <authorList>
            <person name="Faehnle C.R."/>
            <person name="Elkayam E."/>
            <person name="Haase A.D."/>
            <person name="Hannon G.J."/>
            <person name="Joshua-Tor L."/>
        </authorList>
    </citation>
    <scope>FUNCTION</scope>
    <scope>CATALYTIC ACTIVITY</scope>
    <scope>MUTAGENESIS OF GLU-673; PHE-676 AND HIS-807</scope>
</reference>
<reference key="43">
    <citation type="journal article" date="2013" name="J. Proteome Res.">
        <title>Toward a comprehensive characterization of a human cancer cell phosphoproteome.</title>
        <authorList>
            <person name="Zhou H."/>
            <person name="Di Palma S."/>
            <person name="Preisinger C."/>
            <person name="Peng M."/>
            <person name="Polat A.N."/>
            <person name="Heck A.J."/>
            <person name="Mohammed S."/>
        </authorList>
    </citation>
    <scope>PHOSPHORYLATION [LARGE SCALE ANALYSIS] AT SER-387 AND SER-828</scope>
    <scope>IDENTIFICATION BY MASS SPECTROMETRY [LARGE SCALE ANALYSIS]</scope>
    <source>
        <tissue>Cervix carcinoma</tissue>
        <tissue>Erythroleukemia</tissue>
    </source>
</reference>
<reference key="44">
    <citation type="journal article" date="2013" name="Mol. Cell">
        <title>Akt-mediated phosphorylation of argonaute 2 downregulates cleavage and upregulates translational repression of MicroRNA targets.</title>
        <authorList>
            <person name="Horman S.R."/>
            <person name="Janas M.M."/>
            <person name="Litterst C."/>
            <person name="Wang B."/>
            <person name="MacRae I.J."/>
            <person name="Sever M.J."/>
            <person name="Morrissey D.V."/>
            <person name="Graves P."/>
            <person name="Luo B."/>
            <person name="Umesalma S."/>
            <person name="Qi H.H."/>
            <person name="Miraglia L.J."/>
            <person name="Novina C.D."/>
            <person name="Orth A.P."/>
        </authorList>
    </citation>
    <scope>PHOSPHORYLATION AT SER-387</scope>
    <scope>SUBCELLULAR LOCATION</scope>
</reference>
<reference key="45">
    <citation type="journal article" date="2013" name="Nucleic Acids Res.">
        <title>The mammalian TRIM-NHL protein TRIM71/LIN-41 is a repressor of mRNA function.</title>
        <authorList>
            <person name="Loedige I."/>
            <person name="Gaidatzis D."/>
            <person name="Sack R."/>
            <person name="Meister G."/>
            <person name="Filipowicz W."/>
        </authorList>
    </citation>
    <scope>SUBCELLULAR LOCATION</scope>
    <scope>INTERACTION WITH TRIM71</scope>
</reference>
<reference key="46">
    <citation type="journal article" date="2014" name="Mol. Cell">
        <title>MOV10 Is a 5' to 3' RNA helicase contributing to UPF1 mRNA target degradation by translocation along 3' UTRs.</title>
        <authorList>
            <person name="Gregersen L.H."/>
            <person name="Schueler M."/>
            <person name="Munschauer M."/>
            <person name="Mastrobuoni G."/>
            <person name="Chen W."/>
            <person name="Kempa S."/>
            <person name="Dieterich C."/>
            <person name="Landthaler M."/>
        </authorList>
    </citation>
    <scope>INTERACTION WITH MOV10</scope>
</reference>
<reference key="47">
    <citation type="journal article" date="2015" name="Biochem. Biophys. Res. Commun.">
        <title>Clnk plays a role in TNF-alpha-induced cell death in murine fibrosarcoma cell line L929.</title>
        <authorList>
            <person name="Xu M."/>
            <person name="Cai C."/>
            <person name="Sun X."/>
            <person name="Chen W."/>
            <person name="Li Q."/>
            <person name="Zhou H."/>
        </authorList>
    </citation>
    <scope>INTERACTION WITH CLNK</scope>
</reference>
<reference key="48">
    <citation type="journal article" date="2015" name="Nat. Commun.">
        <title>Roquin binds microRNA-146a and Argonaute2 to regulate microRNA homeostasis.</title>
        <authorList>
            <person name="Srivastava M."/>
            <person name="Duan G."/>
            <person name="Kershaw N.J."/>
            <person name="Athanasopoulos V."/>
            <person name="Yeo J.H."/>
            <person name="Ose T."/>
            <person name="Hu D."/>
            <person name="Brown S.H."/>
            <person name="Jergic S."/>
            <person name="Patel H.R."/>
            <person name="Pratama A."/>
            <person name="Richards S."/>
            <person name="Verma A."/>
            <person name="Jones E.Y."/>
            <person name="Heissmeyer V."/>
            <person name="Preiss T."/>
            <person name="Dixon N.E."/>
            <person name="Chong M.M."/>
            <person name="Babon J.J."/>
            <person name="Vinuesa C.G."/>
        </authorList>
    </citation>
    <scope>INTERACTION WITH RC3H1</scope>
</reference>
<reference key="49">
    <citation type="journal article" date="2017" name="Nature">
        <title>An Argonaute phosphorylation cycle promotes microRNA-mediated silencing.</title>
        <authorList>
            <person name="Golden R.J."/>
            <person name="Chen B."/>
            <person name="Li T."/>
            <person name="Braun J."/>
            <person name="Manjunath H."/>
            <person name="Chen X."/>
            <person name="Wu J."/>
            <person name="Schmid V."/>
            <person name="Chang T.C."/>
            <person name="Kopp F."/>
            <person name="Ramirez-Martinez A."/>
            <person name="Tagliabracci V.S."/>
            <person name="Chen Z.J."/>
            <person name="Xie Y."/>
            <person name="Mendell J.T."/>
        </authorList>
    </citation>
    <scope>PHOSPHORYLATION AT SER-824; SER-828; SER-831 AND SER-834</scope>
</reference>
<reference key="50">
    <citation type="journal article" date="2017" name="Science">
        <title>Tudor-SN-mediated endonucleolytic decay of human cell microRNAs promotes G1/S phase transition.</title>
        <authorList>
            <person name="Elbarbary R.A."/>
            <person name="Miyoshi K."/>
            <person name="Myers J.R."/>
            <person name="Du P."/>
            <person name="Ashton J.M."/>
            <person name="Tian B."/>
            <person name="Maquat L.E."/>
        </authorList>
    </citation>
    <scope>INTERACTION WITH SND1</scope>
</reference>
<reference key="51">
    <citation type="journal article" date="2018" name="Mol. Cell">
        <title>High-Density Proximity Mapping Reveals the Subcellular Organization of mRNA-Associated Granules and Bodies.</title>
        <authorList>
            <person name="Youn J.Y."/>
            <person name="Dunham W.H."/>
            <person name="Hong S.J."/>
            <person name="Knight J.D.R."/>
            <person name="Bashkurov M."/>
            <person name="Chen G.I."/>
            <person name="Bagci H."/>
            <person name="Rathod B."/>
            <person name="MacLeod G."/>
            <person name="Eng S.W.M."/>
            <person name="Angers S."/>
            <person name="Morris Q."/>
            <person name="Fabian M."/>
            <person name="Cote J.F."/>
            <person name="Gingras A.C."/>
        </authorList>
    </citation>
    <scope>INTERACTION WITH GARRE1</scope>
</reference>
<reference key="52">
    <citation type="journal article" date="2018" name="J. Virol.">
        <title>Rotavirus Induces Formation of Remodeled Stress Granules and P Bodies and Their Sequestration in Viroplasms To Promote Progeny Virus Production.</title>
        <authorList>
            <person name="Dhillon P."/>
            <person name="Rao C.D."/>
        </authorList>
    </citation>
    <scope>INTERACTION WITH ROTAVIRUS A NON-STRUCTURAL PROTEIN 5 (MICROBIAL INFECTION)</scope>
</reference>
<reference key="53">
    <citation type="journal article" date="2019" name="Nucleic Acids Res.">
        <title>KSHV RNA-binding protein ORF57 inhibits P-body formation to promote viral multiplication by interaction with Ago2 and GW182.</title>
        <authorList>
            <person name="Sharma N.R."/>
            <person name="Majerciak V."/>
            <person name="Kruhlak M.J."/>
            <person name="Yu L."/>
            <person name="Kang J.G."/>
            <person name="Yang A."/>
            <person name="Gu S."/>
            <person name="Fritzler M.J."/>
            <person name="Zheng Z.M."/>
        </authorList>
    </citation>
    <scope>INTERACTION WITH HUMAN HERPES VIRUS 8 PROTEIN KTA/ORF57 (MICROBIAL INFECTION)</scope>
    <scope>SUBCELLULAR LOCATION</scope>
</reference>
<reference key="54">
    <citation type="journal article" date="2020" name="Science">
        <title>A ubiquitin ligase mediates target-directed microRNA decay independently of tailing and trimming.</title>
        <authorList>
            <person name="Han J."/>
            <person name="LaVigne C.A."/>
            <person name="Jones B.T."/>
            <person name="Zhang H."/>
            <person name="Gillett F."/>
            <person name="Mendell J.T."/>
        </authorList>
    </citation>
    <scope>UBIQUITINATION</scope>
</reference>
<reference key="55">
    <citation type="journal article" date="2020" name="Science">
        <title>The ZSWIM8 ubiquitin ligase mediates target-directed microRNA degradation.</title>
        <authorList>
            <person name="Shi C.Y."/>
            <person name="Kingston E.R."/>
            <person name="Kleaveland B."/>
            <person name="Lin D.H."/>
            <person name="Stubna M.W."/>
            <person name="Bartel D.P."/>
        </authorList>
    </citation>
    <scope>UBIQUITINATION</scope>
</reference>
<reference key="56">
    <citation type="journal article" date="2020" name="Nat. Commun.">
        <title>Germline AGO2 mutations impair RNA interference and human neurological development.</title>
        <authorList>
            <person name="Lessel D."/>
            <person name="Zeitler D.M."/>
            <person name="Reijnders M.R.F."/>
            <person name="Kazantsev A."/>
            <person name="Hassani Nia F."/>
            <person name="Bartholomaeus A."/>
            <person name="Martens V."/>
            <person name="Bruckmann A."/>
            <person name="Graus V."/>
            <person name="McConkie-Rosell A."/>
            <person name="McDonald M."/>
            <person name="Lozic B."/>
            <person name="Tan E.S."/>
            <person name="Gerkes E."/>
            <person name="Johannsen J."/>
            <person name="Denecke J."/>
            <person name="Telegrafi A."/>
            <person name="Zonneveld-Huijssoon E."/>
            <person name="Lemmink H.H."/>
            <person name="Cham B.W.M."/>
            <person name="Kovacevic T."/>
            <person name="Ramsdell L."/>
            <person name="Foss K."/>
            <person name="Le Duc D."/>
            <person name="Mitter D."/>
            <person name="Syrbe S."/>
            <person name="Merkenschlager A."/>
            <person name="Sinnema M."/>
            <person name="Panis B."/>
            <person name="Lazier J."/>
            <person name="Osmond M."/>
            <person name="Hartley T."/>
            <person name="Mortreux J."/>
            <person name="Busa T."/>
            <person name="Missirian C."/>
            <person name="Prasun P."/>
            <person name="Luettgen S."/>
            <person name="Mannucci I."/>
            <person name="Lessel I."/>
            <person name="Schob C."/>
            <person name="Kindler S."/>
            <person name="Pappas J."/>
            <person name="Rabin R."/>
            <person name="Willemsen M."/>
            <person name="Gardeitchik T."/>
            <person name="Loehner K."/>
            <person name="Rump P."/>
            <person name="Dias K.R."/>
            <person name="Evans C.A."/>
            <person name="Andrews P.I."/>
            <person name="Roscioli T."/>
            <person name="Brunner H.G."/>
            <person name="Chijiwa C."/>
            <person name="Lewis M.E.S."/>
            <person name="Jamra R.A."/>
            <person name="Dyment D.A."/>
            <person name="Boycott K.M."/>
            <person name="Stegmann A.P.A."/>
            <person name="Kubisch C."/>
            <person name="Tan E.C."/>
            <person name="Mirzaa G.M."/>
            <person name="McWalter K."/>
            <person name="Kleefstra T."/>
            <person name="Pfundt R."/>
            <person name="Ignatova Z."/>
            <person name="Meister G."/>
            <person name="Kreienkamp H.J."/>
        </authorList>
    </citation>
    <scope>INVOLVEMENT IN LESKRES</scope>
    <scope>VARIANTS LESKRES CYS-201; VAL-201; GLN-203; MET-357; THR-364; PRO-367; SER-573; ARG-733; TYR-751 AND ARG-760</scope>
    <scope>CHARACTERIZATION OF VARIANTS LESKRES PRO-192; CYS-201; VAL-201; GLN-203; MET-357; THR-364; PRO-367; SER-573; ARG-733; TYR-751 AND ARG-760</scope>
    <scope>SUBCELLULAR LOCATION</scope>
    <scope>PHOSPHORYLATION AT SER-387</scope>
    <scope>INTERACTION WITH DICER1</scope>
</reference>
<reference key="57">
    <citation type="journal article" date="2020" name="J. Virol.">
        <title>Epstein-Barr Virus (EBV) Tegument Protein BGLF2 Suppresses Type I Interferon Signaling To Promote EBV Reactivation.</title>
        <authorList>
            <person name="Liu X."/>
            <person name="Sadaoka T."/>
            <person name="Krogmann T."/>
            <person name="Cohen J.I."/>
        </authorList>
    </citation>
    <scope>INTERACTION WITH EPSTEIN-BARR VIRUS TEGUMENT PROTEIN BGLF2 (MICROBIAL INFECTION)</scope>
</reference>
<reference key="58">
    <citation type="journal article" date="2021" name="Proc. Natl. Acad. Sci. U.S.A.">
        <title>SARS-CoV-2 expresses a microRNA-like small RNA able to selectively repress host genes.</title>
        <authorList>
            <person name="Pawlica P."/>
            <person name="Yario T.A."/>
            <person name="White S."/>
            <person name="Wang J."/>
            <person name="Moss W.N."/>
            <person name="Hui P."/>
            <person name="Vinetz J.M."/>
            <person name="Steitz J.A."/>
        </authorList>
    </citation>
    <scope>FUNCTION (MICROBIAL INFECTION)</scope>
</reference>
<reference key="59">
    <citation type="journal article" date="2023" name="Sci. Rep.">
        <title>Regulation of microRNA expression by the adaptor protein GRB2.</title>
        <authorList>
            <person name="Stainthorp A.K."/>
            <person name="Lin C.C."/>
            <person name="Wang D."/>
            <person name="Medhi R."/>
            <person name="Ahmed Z."/>
            <person name="Suen K.M."/>
            <person name="Miska E.A."/>
            <person name="Whitehouse A."/>
            <person name="Ladbury J.E."/>
        </authorList>
    </citation>
    <scope>FUNCTION</scope>
    <scope>INTERACTION WITH GRB2</scope>
</reference>
<reference key="60">
    <citation type="journal article" date="2010" name="Nature">
        <title>Structural basis for 5'-nucleotide base-specific recognition of guide RNA by human AGO2.</title>
        <authorList>
            <person name="Frank F."/>
            <person name="Sonenberg N."/>
            <person name="Nagar B."/>
        </authorList>
    </citation>
    <scope>X-RAY CRYSTALLOGRAPHY (1.69 ANGSTROMS) OF 439-575 IN COMPLEX WITH AMP; CMP; GMP AND PHOSPHATE</scope>
</reference>
<reference key="61">
    <citation type="journal article" date="2011" name="EMBO Rep.">
        <title>Structural analysis of 5'-mRNA-cap interactions with the human AGO2 MID domain.</title>
        <authorList>
            <person name="Frank F."/>
            <person name="Fabian M.R."/>
            <person name="Stepinski J."/>
            <person name="Jemielity J."/>
            <person name="Darzynkiewicz E."/>
            <person name="Sonenberg N."/>
            <person name="Nagar B."/>
        </authorList>
    </citation>
    <scope>X-RAY CRYSTALLOGRAPHY (2.00 ANGSTROMS) OF 439-575 IN COMPLEX WITH 7-MGTPG AND ATP</scope>
</reference>
<reference key="62">
    <citation type="journal article" date="2012" name="Cell">
        <title>The structure of human argonaute-2 in complex with miR-20a.</title>
        <authorList>
            <person name="Elkayam E."/>
            <person name="Kuhn C.D."/>
            <person name="Tocilj A."/>
            <person name="Haase A.D."/>
            <person name="Greene E.M."/>
            <person name="Hannon G.J."/>
            <person name="Joshua-Tor L."/>
        </authorList>
    </citation>
    <scope>X-RAY CRYSTALLOGRAPHY (2.25 ANGSTROMS) IN COMPLEX WITH MIRNA-20A</scope>
    <scope>GUIDE RNA-BINDING</scope>
</reference>
<reference key="63">
    <citation type="journal article" date="2012" name="Science">
        <title>The crystal structure of human Argonaute2.</title>
        <authorList>
            <person name="Schirle N.T."/>
            <person name="MacRae I.J."/>
        </authorList>
    </citation>
    <scope>X-RAY CRYSTALLOGRAPHY (2.30 ANGSTROMS) IN COMPLEX WITH RNA AND L-TRYPTOPHAN</scope>
    <scope>GUIDE RNA-BINDING</scope>
</reference>
<proteinExistence type="evidence at protein level"/>
<dbReference type="EC" id="3.1.26.n2" evidence="3 9 46"/>
<dbReference type="EMBL" id="AC067931">
    <property type="status" value="NOT_ANNOTATED_CDS"/>
    <property type="molecule type" value="Genomic_DNA"/>
</dbReference>
<dbReference type="EMBL" id="AC107375">
    <property type="status" value="NOT_ANNOTATED_CDS"/>
    <property type="molecule type" value="Genomic_DNA"/>
</dbReference>
<dbReference type="EMBL" id="BC007633">
    <property type="protein sequence ID" value="AAH07633.1"/>
    <property type="status" value="ALT_INIT"/>
    <property type="molecule type" value="mRNA"/>
</dbReference>
<dbReference type="EMBL" id="BC018727">
    <property type="protein sequence ID" value="AAH18727.2"/>
    <property type="molecule type" value="mRNA"/>
</dbReference>
<dbReference type="EMBL" id="BC125214">
    <property type="status" value="NOT_ANNOTATED_CDS"/>
    <property type="molecule type" value="mRNA"/>
</dbReference>
<dbReference type="EMBL" id="AY077717">
    <property type="protein sequence ID" value="AAL76093.1"/>
    <property type="status" value="ALT_SEQ"/>
    <property type="molecule type" value="mRNA"/>
</dbReference>
<dbReference type="EMBL" id="BT007229">
    <property type="protein sequence ID" value="AAP35893.1"/>
    <property type="molecule type" value="mRNA"/>
</dbReference>
<dbReference type="EMBL" id="AF121255">
    <property type="protein sequence ID" value="AAF13034.2"/>
    <property type="molecule type" value="mRNA"/>
</dbReference>
<dbReference type="CCDS" id="CCDS55279.1">
    <molecule id="Q9UKV8-2"/>
</dbReference>
<dbReference type="CCDS" id="CCDS6380.1">
    <molecule id="Q9UKV8-1"/>
</dbReference>
<dbReference type="RefSeq" id="NP_001158095.1">
    <molecule id="Q9UKV8-2"/>
    <property type="nucleotide sequence ID" value="NM_001164623.3"/>
</dbReference>
<dbReference type="RefSeq" id="NP_036286.2">
    <molecule id="Q9UKV8-1"/>
    <property type="nucleotide sequence ID" value="NM_012154.4"/>
</dbReference>
<dbReference type="PDB" id="3LUC">
    <property type="method" value="X-ray"/>
    <property type="resolution" value="1.69 A"/>
    <property type="chains" value="A/B/C=439-575"/>
</dbReference>
<dbReference type="PDB" id="3LUD">
    <property type="method" value="X-ray"/>
    <property type="resolution" value="2.10 A"/>
    <property type="chains" value="A/B/C=439-575"/>
</dbReference>
<dbReference type="PDB" id="3LUG">
    <property type="method" value="X-ray"/>
    <property type="resolution" value="1.85 A"/>
    <property type="chains" value="A/B/C=439-575"/>
</dbReference>
<dbReference type="PDB" id="3LUH">
    <property type="method" value="X-ray"/>
    <property type="resolution" value="2.00 A"/>
    <property type="chains" value="A/B/C=439-575"/>
</dbReference>
<dbReference type="PDB" id="3LUJ">
    <property type="method" value="X-ray"/>
    <property type="resolution" value="1.80 A"/>
    <property type="chains" value="A/B/C=439-575"/>
</dbReference>
<dbReference type="PDB" id="3LUK">
    <property type="method" value="X-ray"/>
    <property type="resolution" value="1.70 A"/>
    <property type="chains" value="A/B/C=439-575"/>
</dbReference>
<dbReference type="PDB" id="3QX8">
    <property type="method" value="X-ray"/>
    <property type="resolution" value="2.30 A"/>
    <property type="chains" value="A/B/C=439-575"/>
</dbReference>
<dbReference type="PDB" id="3QX9">
    <property type="method" value="X-ray"/>
    <property type="resolution" value="2.00 A"/>
    <property type="chains" value="A/B/C=439-575"/>
</dbReference>
<dbReference type="PDB" id="4F3T">
    <property type="method" value="X-ray"/>
    <property type="resolution" value="2.25 A"/>
    <property type="chains" value="A=1-859"/>
</dbReference>
<dbReference type="PDB" id="4OLA">
    <property type="method" value="X-ray"/>
    <property type="resolution" value="2.30 A"/>
    <property type="chains" value="A=1-859"/>
</dbReference>
<dbReference type="PDB" id="4OLB">
    <property type="method" value="X-ray"/>
    <property type="resolution" value="2.90 A"/>
    <property type="chains" value="A=1-859"/>
</dbReference>
<dbReference type="PDB" id="4W5N">
    <property type="method" value="X-ray"/>
    <property type="resolution" value="2.90 A"/>
    <property type="chains" value="A=1-859"/>
</dbReference>
<dbReference type="PDB" id="4W5O">
    <property type="method" value="X-ray"/>
    <property type="resolution" value="1.80 A"/>
    <property type="chains" value="A=1-859"/>
</dbReference>
<dbReference type="PDB" id="4W5Q">
    <property type="method" value="X-ray"/>
    <property type="resolution" value="3.10 A"/>
    <property type="chains" value="A=1-859"/>
</dbReference>
<dbReference type="PDB" id="4W5R">
    <property type="method" value="X-ray"/>
    <property type="resolution" value="2.50 A"/>
    <property type="chains" value="A=1-859"/>
</dbReference>
<dbReference type="PDB" id="4W5T">
    <property type="method" value="X-ray"/>
    <property type="resolution" value="2.50 A"/>
    <property type="chains" value="A=1-859"/>
</dbReference>
<dbReference type="PDB" id="4Z4C">
    <property type="method" value="X-ray"/>
    <property type="resolution" value="2.30 A"/>
    <property type="chains" value="A=1-859"/>
</dbReference>
<dbReference type="PDB" id="4Z4D">
    <property type="method" value="X-ray"/>
    <property type="resolution" value="1.60 A"/>
    <property type="chains" value="A=1-859"/>
</dbReference>
<dbReference type="PDB" id="4Z4E">
    <property type="method" value="X-ray"/>
    <property type="resolution" value="1.80 A"/>
    <property type="chains" value="A=1-859"/>
</dbReference>
<dbReference type="PDB" id="4Z4F">
    <property type="method" value="X-ray"/>
    <property type="resolution" value="2.80 A"/>
    <property type="chains" value="A=1-859"/>
</dbReference>
<dbReference type="PDB" id="4Z4G">
    <property type="method" value="X-ray"/>
    <property type="resolution" value="2.70 A"/>
    <property type="chains" value="A=1-859"/>
</dbReference>
<dbReference type="PDB" id="4Z4H">
    <property type="method" value="X-ray"/>
    <property type="resolution" value="2.50 A"/>
    <property type="chains" value="A=1-859"/>
</dbReference>
<dbReference type="PDB" id="4Z4I">
    <property type="method" value="X-ray"/>
    <property type="resolution" value="2.80 A"/>
    <property type="chains" value="A=1-859"/>
</dbReference>
<dbReference type="PDB" id="5JS1">
    <property type="method" value="X-ray"/>
    <property type="resolution" value="2.50 A"/>
    <property type="chains" value="A=1-859"/>
</dbReference>
<dbReference type="PDB" id="5JS2">
    <property type="method" value="X-ray"/>
    <property type="resolution" value="2.95 A"/>
    <property type="chains" value="A=1-859"/>
</dbReference>
<dbReference type="PDB" id="5KI6">
    <property type="method" value="X-ray"/>
    <property type="resolution" value="2.15 A"/>
    <property type="chains" value="A=1-859"/>
</dbReference>
<dbReference type="PDB" id="5T7B">
    <property type="method" value="X-ray"/>
    <property type="resolution" value="2.53 A"/>
    <property type="chains" value="A=1-859"/>
</dbReference>
<dbReference type="PDB" id="5WEA">
    <property type="method" value="X-ray"/>
    <property type="resolution" value="3.12 A"/>
    <property type="chains" value="A=1-859"/>
</dbReference>
<dbReference type="PDB" id="6CBD">
    <property type="method" value="X-ray"/>
    <property type="resolution" value="2.20 A"/>
    <property type="chains" value="A=1-859"/>
</dbReference>
<dbReference type="PDB" id="6MDZ">
    <property type="method" value="X-ray"/>
    <property type="resolution" value="3.40 A"/>
    <property type="chains" value="A/B=1-859"/>
</dbReference>
<dbReference type="PDB" id="6MFN">
    <property type="method" value="X-ray"/>
    <property type="resolution" value="2.50 A"/>
    <property type="chains" value="A=1-859"/>
</dbReference>
<dbReference type="PDB" id="6MFR">
    <property type="method" value="X-ray"/>
    <property type="resolution" value="3.60 A"/>
    <property type="chains" value="A/B=1-859"/>
</dbReference>
<dbReference type="PDB" id="6N4O">
    <property type="method" value="X-ray"/>
    <property type="resolution" value="2.90 A"/>
    <property type="chains" value="A=1-859"/>
</dbReference>
<dbReference type="PDB" id="6NIT">
    <property type="method" value="X-ray"/>
    <property type="resolution" value="3.80 A"/>
    <property type="chains" value="A/B=1-859"/>
</dbReference>
<dbReference type="PDB" id="6RA4">
    <property type="method" value="X-ray"/>
    <property type="resolution" value="1.90 A"/>
    <property type="chains" value="A/B=222-355"/>
</dbReference>
<dbReference type="PDB" id="7C6B">
    <property type="method" value="X-ray"/>
    <property type="resolution" value="1.70 A"/>
    <property type="chains" value="A/B/C=440-578"/>
</dbReference>
<dbReference type="PDB" id="7D7U">
    <property type="method" value="X-ray"/>
    <property type="resolution" value="2.00 A"/>
    <property type="chains" value="A/B/C=440-578"/>
</dbReference>
<dbReference type="PDB" id="7KI3">
    <property type="method" value="X-ray"/>
    <property type="resolution" value="3.00 A"/>
    <property type="chains" value="A/D=1-859"/>
</dbReference>
<dbReference type="PDB" id="8D6J">
    <property type="method" value="X-ray"/>
    <property type="resolution" value="2.50 A"/>
    <property type="chains" value="A=1-859"/>
</dbReference>
<dbReference type="PDB" id="8D71">
    <property type="method" value="X-ray"/>
    <property type="resolution" value="2.50 A"/>
    <property type="chains" value="A=1-859"/>
</dbReference>
<dbReference type="PDB" id="8THQ">
    <property type="method" value="X-ray"/>
    <property type="resolution" value="2.41 A"/>
    <property type="chains" value="A/B=227-352"/>
</dbReference>
<dbReference type="PDB" id="9BEZ">
    <property type="method" value="X-ray"/>
    <property type="resolution" value="1.90 A"/>
    <property type="chains" value="A/B/C=440-575"/>
</dbReference>
<dbReference type="PDB" id="9BF0">
    <property type="method" value="X-ray"/>
    <property type="resolution" value="1.78 A"/>
    <property type="chains" value="A/B/C=442-575"/>
</dbReference>
<dbReference type="PDB" id="9BF2">
    <property type="method" value="X-ray"/>
    <property type="resolution" value="1.59 A"/>
    <property type="chains" value="A/B/C=440-575"/>
</dbReference>
<dbReference type="PDB" id="9CMP">
    <property type="method" value="EM"/>
    <property type="resolution" value="3.30 A"/>
    <property type="chains" value="A=2-859"/>
</dbReference>
<dbReference type="PDBsum" id="3LUC"/>
<dbReference type="PDBsum" id="3LUD"/>
<dbReference type="PDBsum" id="3LUG"/>
<dbReference type="PDBsum" id="3LUH"/>
<dbReference type="PDBsum" id="3LUJ"/>
<dbReference type="PDBsum" id="3LUK"/>
<dbReference type="PDBsum" id="3QX8"/>
<dbReference type="PDBsum" id="3QX9"/>
<dbReference type="PDBsum" id="4F3T"/>
<dbReference type="PDBsum" id="4OLA"/>
<dbReference type="PDBsum" id="4OLB"/>
<dbReference type="PDBsum" id="4W5N"/>
<dbReference type="PDBsum" id="4W5O"/>
<dbReference type="PDBsum" id="4W5Q"/>
<dbReference type="PDBsum" id="4W5R"/>
<dbReference type="PDBsum" id="4W5T"/>
<dbReference type="PDBsum" id="4Z4C"/>
<dbReference type="PDBsum" id="4Z4D"/>
<dbReference type="PDBsum" id="4Z4E"/>
<dbReference type="PDBsum" id="4Z4F"/>
<dbReference type="PDBsum" id="4Z4G"/>
<dbReference type="PDBsum" id="4Z4H"/>
<dbReference type="PDBsum" id="4Z4I"/>
<dbReference type="PDBsum" id="5JS1"/>
<dbReference type="PDBsum" id="5JS2"/>
<dbReference type="PDBsum" id="5KI6"/>
<dbReference type="PDBsum" id="5T7B"/>
<dbReference type="PDBsum" id="5WEA"/>
<dbReference type="PDBsum" id="6CBD"/>
<dbReference type="PDBsum" id="6MDZ"/>
<dbReference type="PDBsum" id="6MFN"/>
<dbReference type="PDBsum" id="6MFR"/>
<dbReference type="PDBsum" id="6N4O"/>
<dbReference type="PDBsum" id="6NIT"/>
<dbReference type="PDBsum" id="6RA4"/>
<dbReference type="PDBsum" id="7C6B"/>
<dbReference type="PDBsum" id="7D7U"/>
<dbReference type="PDBsum" id="7KI3"/>
<dbReference type="PDBsum" id="8D6J"/>
<dbReference type="PDBsum" id="8D71"/>
<dbReference type="PDBsum" id="8THQ"/>
<dbReference type="PDBsum" id="9BEZ"/>
<dbReference type="PDBsum" id="9BF0"/>
<dbReference type="PDBsum" id="9BF2"/>
<dbReference type="PDBsum" id="9CMP"/>
<dbReference type="EMDB" id="EMD-45752"/>
<dbReference type="SMR" id="Q9UKV8"/>
<dbReference type="BioGRID" id="118041">
    <property type="interactions" value="483"/>
</dbReference>
<dbReference type="ComplexPortal" id="CPX-8623">
    <property type="entry name" value="miRNA RISC complex, TNRC6A variant"/>
</dbReference>
<dbReference type="ComplexPortal" id="CPX-8624">
    <property type="entry name" value="miRNA RISC complex, TNRC6B variant"/>
</dbReference>
<dbReference type="ComplexPortal" id="CPX-8625">
    <property type="entry name" value="miRNA RISC complex, TNRC6C variant"/>
</dbReference>
<dbReference type="CORUM" id="Q9UKV8"/>
<dbReference type="DIP" id="DIP-29194N"/>
<dbReference type="FunCoup" id="Q9UKV8">
    <property type="interactions" value="2179"/>
</dbReference>
<dbReference type="IntAct" id="Q9UKV8">
    <property type="interactions" value="249"/>
</dbReference>
<dbReference type="MINT" id="Q9UKV8"/>
<dbReference type="STRING" id="9606.ENSP00000220592"/>
<dbReference type="BindingDB" id="Q9UKV8"/>
<dbReference type="ChEMBL" id="CHEMBL4680043"/>
<dbReference type="DrugCentral" id="Q9UKV8"/>
<dbReference type="GlyGen" id="Q9UKV8">
    <property type="glycosylation" value="2 sites, 1 N-linked glycan (1 site), 1 O-linked glycan (1 site)"/>
</dbReference>
<dbReference type="iPTMnet" id="Q9UKV8"/>
<dbReference type="MetOSite" id="Q9UKV8"/>
<dbReference type="PhosphoSitePlus" id="Q9UKV8"/>
<dbReference type="SwissPalm" id="Q9UKV8"/>
<dbReference type="BioMuta" id="AGO2"/>
<dbReference type="DMDM" id="229463006"/>
<dbReference type="jPOST" id="Q9UKV8"/>
<dbReference type="MassIVE" id="Q9UKV8"/>
<dbReference type="PaxDb" id="9606-ENSP00000220592"/>
<dbReference type="PeptideAtlas" id="Q9UKV8"/>
<dbReference type="ProteomicsDB" id="84894">
    <molecule id="Q9UKV8-1"/>
</dbReference>
<dbReference type="ProteomicsDB" id="84895">
    <molecule id="Q9UKV8-2"/>
</dbReference>
<dbReference type="Pumba" id="Q9UKV8"/>
<dbReference type="Antibodypedia" id="27626">
    <property type="antibodies" value="351 antibodies from 40 providers"/>
</dbReference>
<dbReference type="DNASU" id="27161"/>
<dbReference type="Ensembl" id="ENST00000220592.10">
    <molecule id="Q9UKV8-1"/>
    <property type="protein sequence ID" value="ENSP00000220592.5"/>
    <property type="gene ID" value="ENSG00000123908.12"/>
</dbReference>
<dbReference type="Ensembl" id="ENST00000519980.5">
    <molecule id="Q9UKV8-2"/>
    <property type="protein sequence ID" value="ENSP00000430176.1"/>
    <property type="gene ID" value="ENSG00000123908.12"/>
</dbReference>
<dbReference type="GeneID" id="27161"/>
<dbReference type="KEGG" id="hsa:27161"/>
<dbReference type="MANE-Select" id="ENST00000220592.10">
    <property type="protein sequence ID" value="ENSP00000220592.5"/>
    <property type="RefSeq nucleotide sequence ID" value="NM_012154.5"/>
    <property type="RefSeq protein sequence ID" value="NP_036286.2"/>
</dbReference>
<dbReference type="UCSC" id="uc003yvm.5">
    <molecule id="Q9UKV8-1"/>
    <property type="organism name" value="human"/>
</dbReference>
<dbReference type="AGR" id="HGNC:3263"/>
<dbReference type="CTD" id="27161"/>
<dbReference type="DisGeNET" id="27161"/>
<dbReference type="GeneCards" id="AGO2"/>
<dbReference type="HGNC" id="HGNC:3263">
    <property type="gene designation" value="AGO2"/>
</dbReference>
<dbReference type="HPA" id="ENSG00000123908">
    <property type="expression patterns" value="Low tissue specificity"/>
</dbReference>
<dbReference type="MalaCards" id="AGO2"/>
<dbReference type="MIM" id="606229">
    <property type="type" value="gene"/>
</dbReference>
<dbReference type="MIM" id="619149">
    <property type="type" value="phenotype"/>
</dbReference>
<dbReference type="neXtProt" id="NX_Q9UKV8"/>
<dbReference type="OpenTargets" id="ENSG00000123908"/>
<dbReference type="Orphanet" id="528084">
    <property type="disease" value="Non-specific syndromic intellectual disability"/>
</dbReference>
<dbReference type="PharmGKB" id="PA27694"/>
<dbReference type="VEuPathDB" id="HostDB:ENSG00000123908"/>
<dbReference type="eggNOG" id="KOG1041">
    <property type="taxonomic scope" value="Eukaryota"/>
</dbReference>
<dbReference type="GeneTree" id="ENSGT00940000155239"/>
<dbReference type="HOGENOM" id="CLU_004544_4_3_1"/>
<dbReference type="InParanoid" id="Q9UKV8"/>
<dbReference type="OMA" id="CFAQQQH"/>
<dbReference type="OrthoDB" id="10252740at2759"/>
<dbReference type="PAN-GO" id="Q9UKV8">
    <property type="GO annotations" value="3 GO annotations based on evolutionary models"/>
</dbReference>
<dbReference type="PhylomeDB" id="Q9UKV8"/>
<dbReference type="TreeFam" id="TF101510"/>
<dbReference type="PathwayCommons" id="Q9UKV8"/>
<dbReference type="Reactome" id="R-HSA-1912408">
    <property type="pathway name" value="Pre-NOTCH Transcription and Translation"/>
</dbReference>
<dbReference type="Reactome" id="R-HSA-203927">
    <property type="pathway name" value="MicroRNA (miRNA) biogenesis"/>
</dbReference>
<dbReference type="Reactome" id="R-HSA-4086398">
    <property type="pathway name" value="Ca2+ pathway"/>
</dbReference>
<dbReference type="Reactome" id="R-HSA-426486">
    <property type="pathway name" value="Small interfering RNA (siRNA) biogenesis"/>
</dbReference>
<dbReference type="Reactome" id="R-HSA-426496">
    <property type="pathway name" value="Post-transcriptional silencing by small RNAs"/>
</dbReference>
<dbReference type="Reactome" id="R-HSA-5578749">
    <property type="pathway name" value="Transcriptional regulation by small RNAs"/>
</dbReference>
<dbReference type="Reactome" id="R-HSA-5628897">
    <property type="pathway name" value="TP53 Regulates Metabolic Genes"/>
</dbReference>
<dbReference type="Reactome" id="R-HSA-5687128">
    <property type="pathway name" value="MAPK6/MAPK4 signaling"/>
</dbReference>
<dbReference type="Reactome" id="R-HSA-8934593">
    <property type="pathway name" value="Regulation of RUNX1 Expression and Activity"/>
</dbReference>
<dbReference type="Reactome" id="R-HSA-8943723">
    <property type="pathway name" value="Regulation of PTEN mRNA translation"/>
</dbReference>
<dbReference type="Reactome" id="R-HSA-8948700">
    <property type="pathway name" value="Competing endogenous RNAs (ceRNAs) regulate PTEN translation"/>
</dbReference>
<dbReference type="Reactome" id="R-HSA-8986944">
    <property type="pathway name" value="Transcriptional Regulation by MECP2"/>
</dbReference>
<dbReference type="Reactome" id="R-HSA-9018519">
    <property type="pathway name" value="Estrogen-dependent gene expression"/>
</dbReference>
<dbReference type="Reactome" id="R-HSA-9022692">
    <property type="pathway name" value="Regulation of MECP2 expression and activity"/>
</dbReference>
<dbReference type="Reactome" id="R-HSA-9029569">
    <property type="pathway name" value="NR1H3 &amp; NR1H2 regulate gene expression linked to cholesterol transport and efflux"/>
</dbReference>
<dbReference type="Reactome" id="R-HSA-9725371">
    <property type="pathway name" value="Nuclear events stimulated by ALK signaling in cancer"/>
</dbReference>
<dbReference type="Reactome" id="R-HSA-9759811">
    <property type="pathway name" value="Regulation of CDH11 mRNA translation by microRNAs"/>
</dbReference>
<dbReference type="Reactome" id="R-HSA-9768778">
    <property type="pathway name" value="Regulation of NPAS4 mRNA translation"/>
</dbReference>
<dbReference type="Reactome" id="R-HSA-9820841">
    <property type="pathway name" value="M-decay: degradation of maternal mRNAs by maternally stored factors"/>
</dbReference>
<dbReference type="Reactome" id="R-HSA-9824594">
    <property type="pathway name" value="Regulation of MITF-M-dependent genes involved in apoptosis"/>
</dbReference>
<dbReference type="Reactome" id="R-HSA-9839394">
    <property type="pathway name" value="TGFBR3 expression"/>
</dbReference>
<dbReference type="SignaLink" id="Q9UKV8"/>
<dbReference type="SIGNOR" id="Q9UKV8"/>
<dbReference type="BioGRID-ORCS" id="27161">
    <property type="hits" value="49 hits in 1163 CRISPR screens"/>
</dbReference>
<dbReference type="CD-CODE" id="232F8A39">
    <property type="entry name" value="P-body"/>
</dbReference>
<dbReference type="CD-CODE" id="278829DE">
    <property type="entry name" value="Chromatoid body"/>
</dbReference>
<dbReference type="CD-CODE" id="804901D1">
    <property type="entry name" value="Nuclear speckle"/>
</dbReference>
<dbReference type="CD-CODE" id="9DBB3093">
    <property type="entry name" value="GW-body"/>
</dbReference>
<dbReference type="CD-CODE" id="C5843A5F">
    <property type="entry name" value="miRISC condensate"/>
</dbReference>
<dbReference type="CD-CODE" id="DEE660B4">
    <property type="entry name" value="Stress granule"/>
</dbReference>
<dbReference type="CD-CODE" id="F85A2E29">
    <property type="entry name" value="IMP1 RNP granule"/>
</dbReference>
<dbReference type="ChiTaRS" id="AGO2">
    <property type="organism name" value="human"/>
</dbReference>
<dbReference type="EvolutionaryTrace" id="Q9UKV8"/>
<dbReference type="GeneWiki" id="EIF2C2"/>
<dbReference type="GenomeRNAi" id="27161"/>
<dbReference type="Pharos" id="Q9UKV8">
    <property type="development level" value="Tbio"/>
</dbReference>
<dbReference type="PRO" id="PR:Q9UKV8"/>
<dbReference type="Proteomes" id="UP000005640">
    <property type="component" value="Chromosome 8"/>
</dbReference>
<dbReference type="RNAct" id="Q9UKV8">
    <property type="molecule type" value="protein"/>
</dbReference>
<dbReference type="Bgee" id="ENSG00000123908">
    <property type="expression patterns" value="Expressed in colonic epithelium and 198 other cell types or tissues"/>
</dbReference>
<dbReference type="ExpressionAtlas" id="Q9UKV8">
    <property type="expression patterns" value="baseline and differential"/>
</dbReference>
<dbReference type="GO" id="GO:0005737">
    <property type="term" value="C:cytoplasm"/>
    <property type="evidence" value="ECO:0000314"/>
    <property type="project" value="UniProtKB"/>
</dbReference>
<dbReference type="GO" id="GO:0036464">
    <property type="term" value="C:cytoplasmic ribonucleoprotein granule"/>
    <property type="evidence" value="ECO:0000314"/>
    <property type="project" value="HPA"/>
</dbReference>
<dbReference type="GO" id="GO:0005829">
    <property type="term" value="C:cytosol"/>
    <property type="evidence" value="ECO:0000314"/>
    <property type="project" value="HPA"/>
</dbReference>
<dbReference type="GO" id="GO:0030425">
    <property type="term" value="C:dendrite"/>
    <property type="evidence" value="ECO:0007669"/>
    <property type="project" value="Ensembl"/>
</dbReference>
<dbReference type="GO" id="GO:0070062">
    <property type="term" value="C:extracellular exosome"/>
    <property type="evidence" value="ECO:0000314"/>
    <property type="project" value="BHF-UCL"/>
</dbReference>
<dbReference type="GO" id="GO:0098978">
    <property type="term" value="C:glutamatergic synapse"/>
    <property type="evidence" value="ECO:0000314"/>
    <property type="project" value="SynGO"/>
</dbReference>
<dbReference type="GO" id="GO:0016020">
    <property type="term" value="C:membrane"/>
    <property type="evidence" value="ECO:0007005"/>
    <property type="project" value="UniProtKB"/>
</dbReference>
<dbReference type="GO" id="GO:0005654">
    <property type="term" value="C:nucleoplasm"/>
    <property type="evidence" value="ECO:0000304"/>
    <property type="project" value="Reactome"/>
</dbReference>
<dbReference type="GO" id="GO:0005634">
    <property type="term" value="C:nucleus"/>
    <property type="evidence" value="ECO:0000314"/>
    <property type="project" value="ARUK-UCL"/>
</dbReference>
<dbReference type="GO" id="GO:0000932">
    <property type="term" value="C:P-body"/>
    <property type="evidence" value="ECO:0000314"/>
    <property type="project" value="UniProtKB"/>
</dbReference>
<dbReference type="GO" id="GO:0098794">
    <property type="term" value="C:postsynapse"/>
    <property type="evidence" value="ECO:0000314"/>
    <property type="project" value="SynGO"/>
</dbReference>
<dbReference type="GO" id="GO:0016442">
    <property type="term" value="C:RISC complex"/>
    <property type="evidence" value="ECO:0000314"/>
    <property type="project" value="UniProtKB"/>
</dbReference>
<dbReference type="GO" id="GO:0070578">
    <property type="term" value="C:RISC-loading complex"/>
    <property type="evidence" value="ECO:0000314"/>
    <property type="project" value="UniProtKB"/>
</dbReference>
<dbReference type="GO" id="GO:0001046">
    <property type="term" value="F:core promoter sequence-specific DNA binding"/>
    <property type="evidence" value="ECO:0000315"/>
    <property type="project" value="BHF-UCL"/>
</dbReference>
<dbReference type="GO" id="GO:0003725">
    <property type="term" value="F:double-stranded RNA binding"/>
    <property type="evidence" value="ECO:0000314"/>
    <property type="project" value="BHF-UCL"/>
</dbReference>
<dbReference type="GO" id="GO:0090624">
    <property type="term" value="F:endoribonuclease activity, cleaving miRNA-paired mRNA"/>
    <property type="evidence" value="ECO:0000314"/>
    <property type="project" value="BHF-UCL"/>
</dbReference>
<dbReference type="GO" id="GO:0070551">
    <property type="term" value="F:endoribonuclease activity, cleaving siRNA-paired mRNA"/>
    <property type="evidence" value="ECO:0000314"/>
    <property type="project" value="UniProtKB"/>
</dbReference>
<dbReference type="GO" id="GO:0046872">
    <property type="term" value="F:metal ion binding"/>
    <property type="evidence" value="ECO:0007669"/>
    <property type="project" value="UniProtKB-KW"/>
</dbReference>
<dbReference type="GO" id="GO:0035198">
    <property type="term" value="F:miRNA binding"/>
    <property type="evidence" value="ECO:0000314"/>
    <property type="project" value="BHF-UCL"/>
</dbReference>
<dbReference type="GO" id="GO:0035925">
    <property type="term" value="F:mRNA 3'-UTR AU-rich region binding"/>
    <property type="evidence" value="ECO:0000314"/>
    <property type="project" value="UniProtKB"/>
</dbReference>
<dbReference type="GO" id="GO:0098808">
    <property type="term" value="F:mRNA cap binding"/>
    <property type="evidence" value="ECO:0000314"/>
    <property type="project" value="UniProtKB"/>
</dbReference>
<dbReference type="GO" id="GO:0000340">
    <property type="term" value="F:RNA 7-methylguanosine cap binding"/>
    <property type="evidence" value="ECO:0000314"/>
    <property type="project" value="UniProtKB"/>
</dbReference>
<dbReference type="GO" id="GO:0003723">
    <property type="term" value="F:RNA binding"/>
    <property type="evidence" value="ECO:0007005"/>
    <property type="project" value="UniProtKB"/>
</dbReference>
<dbReference type="GO" id="GO:0004521">
    <property type="term" value="F:RNA endonuclease activity"/>
    <property type="evidence" value="ECO:0000314"/>
    <property type="project" value="BHF-UCL"/>
</dbReference>
<dbReference type="GO" id="GO:0000993">
    <property type="term" value="F:RNA polymerase II complex binding"/>
    <property type="evidence" value="ECO:0000314"/>
    <property type="project" value="BHF-UCL"/>
</dbReference>
<dbReference type="GO" id="GO:0003727">
    <property type="term" value="F:single-stranded RNA binding"/>
    <property type="evidence" value="ECO:0000314"/>
    <property type="project" value="BHF-UCL"/>
</dbReference>
<dbReference type="GO" id="GO:0035197">
    <property type="term" value="F:siRNA binding"/>
    <property type="evidence" value="ECO:0000314"/>
    <property type="project" value="UniProtKB"/>
</dbReference>
<dbReference type="GO" id="GO:0003743">
    <property type="term" value="F:translation initiation factor activity"/>
    <property type="evidence" value="ECO:0000303"/>
    <property type="project" value="UniProtKB"/>
</dbReference>
<dbReference type="GO" id="GO:0010586">
    <property type="term" value="P:miRNA metabolic process"/>
    <property type="evidence" value="ECO:0007669"/>
    <property type="project" value="Ensembl"/>
</dbReference>
<dbReference type="GO" id="GO:0035196">
    <property type="term" value="P:miRNA processing"/>
    <property type="evidence" value="ECO:0000314"/>
    <property type="project" value="BHF-UCL"/>
</dbReference>
<dbReference type="GO" id="GO:0035278">
    <property type="term" value="P:miRNA-mediated gene silencing by inhibition of translation"/>
    <property type="evidence" value="ECO:0000314"/>
    <property type="project" value="UniProtKB"/>
</dbReference>
<dbReference type="GO" id="GO:0035279">
    <property type="term" value="P:miRNA-mediated gene silencing by mRNA destabilization"/>
    <property type="evidence" value="ECO:0000314"/>
    <property type="project" value="UniProtKB"/>
</dbReference>
<dbReference type="GO" id="GO:0042985">
    <property type="term" value="P:negative regulation of amyloid precursor protein biosynthetic process"/>
    <property type="evidence" value="ECO:0000250"/>
    <property type="project" value="ARUK-UCL"/>
</dbReference>
<dbReference type="GO" id="GO:0045947">
    <property type="term" value="P:negative regulation of translational initiation"/>
    <property type="evidence" value="ECO:0000314"/>
    <property type="project" value="UniProtKB"/>
</dbReference>
<dbReference type="GO" id="GO:0033962">
    <property type="term" value="P:P-body assembly"/>
    <property type="evidence" value="ECO:0000314"/>
    <property type="project" value="UniProt"/>
</dbReference>
<dbReference type="GO" id="GO:0045766">
    <property type="term" value="P:positive regulation of angiogenesis"/>
    <property type="evidence" value="ECO:0000314"/>
    <property type="project" value="BHF-UCL"/>
</dbReference>
<dbReference type="GO" id="GO:1900153">
    <property type="term" value="P:positive regulation of nuclear-transcribed mRNA catabolic process, deadenylation-dependent decay"/>
    <property type="evidence" value="ECO:0000250"/>
    <property type="project" value="UniProtKB"/>
</dbReference>
<dbReference type="GO" id="GO:0060213">
    <property type="term" value="P:positive regulation of nuclear-transcribed mRNA poly(A) tail shortening"/>
    <property type="evidence" value="ECO:0000250"/>
    <property type="project" value="UniProtKB"/>
</dbReference>
<dbReference type="GO" id="GO:0045944">
    <property type="term" value="P:positive regulation of transcription by RNA polymerase II"/>
    <property type="evidence" value="ECO:0000315"/>
    <property type="project" value="BHF-UCL"/>
</dbReference>
<dbReference type="GO" id="GO:0045727">
    <property type="term" value="P:positive regulation of translation"/>
    <property type="evidence" value="ECO:0000314"/>
    <property type="project" value="UniProtKB"/>
</dbReference>
<dbReference type="GO" id="GO:1901165">
    <property type="term" value="P:positive regulation of trophoblast cell migration"/>
    <property type="evidence" value="ECO:0000315"/>
    <property type="project" value="BHF-UCL"/>
</dbReference>
<dbReference type="GO" id="GO:0009791">
    <property type="term" value="P:post-embryonic development"/>
    <property type="evidence" value="ECO:0007669"/>
    <property type="project" value="Ensembl"/>
</dbReference>
<dbReference type="GO" id="GO:0031054">
    <property type="term" value="P:pre-miRNA processing"/>
    <property type="evidence" value="ECO:0000314"/>
    <property type="project" value="UniProtKB"/>
</dbReference>
<dbReference type="GO" id="GO:0090128">
    <property type="term" value="P:regulation of synapse maturation"/>
    <property type="evidence" value="ECO:0000314"/>
    <property type="project" value="SynGO"/>
</dbReference>
<dbReference type="GO" id="GO:0031047">
    <property type="term" value="P:regulatory ncRNA-mediated gene silencing"/>
    <property type="evidence" value="ECO:0000250"/>
    <property type="project" value="UniProtKB"/>
</dbReference>
<dbReference type="GO" id="GO:0035194">
    <property type="term" value="P:regulatory ncRNA-mediated post-transcriptional gene silencing"/>
    <property type="evidence" value="ECO:0000318"/>
    <property type="project" value="GO_Central"/>
</dbReference>
<dbReference type="GO" id="GO:0070922">
    <property type="term" value="P:RISC complex assembly"/>
    <property type="evidence" value="ECO:0000314"/>
    <property type="project" value="BHF-UCL"/>
</dbReference>
<dbReference type="GO" id="GO:0030422">
    <property type="term" value="P:siRNA processing"/>
    <property type="evidence" value="ECO:0000314"/>
    <property type="project" value="ComplexPortal"/>
</dbReference>
<dbReference type="GO" id="GO:0090625">
    <property type="term" value="P:siRNA-mediated gene silencing by mRNA destabilization"/>
    <property type="evidence" value="ECO:0000314"/>
    <property type="project" value="BHF-UCL"/>
</dbReference>
<dbReference type="GO" id="GO:0006412">
    <property type="term" value="P:translation"/>
    <property type="evidence" value="ECO:0000303"/>
    <property type="project" value="UniProtKB"/>
</dbReference>
<dbReference type="CDD" id="cd02846">
    <property type="entry name" value="PAZ_argonaute_like"/>
    <property type="match status" value="1"/>
</dbReference>
<dbReference type="CDD" id="cd04657">
    <property type="entry name" value="Piwi_ago-like"/>
    <property type="match status" value="1"/>
</dbReference>
<dbReference type="DisProt" id="DP00736"/>
<dbReference type="FunFam" id="2.170.260.10:FF:000001">
    <property type="entry name" value="Protein argonaute-2"/>
    <property type="match status" value="1"/>
</dbReference>
<dbReference type="FunFam" id="3.30.420.10:FF:000001">
    <property type="entry name" value="Protein argonaute-2"/>
    <property type="match status" value="1"/>
</dbReference>
<dbReference type="FunFam" id="3.40.50.2300:FF:000005">
    <property type="entry name" value="Protein argonaute-2"/>
    <property type="match status" value="1"/>
</dbReference>
<dbReference type="Gene3D" id="3.40.50.2300">
    <property type="match status" value="1"/>
</dbReference>
<dbReference type="Gene3D" id="2.170.260.10">
    <property type="entry name" value="paz domain"/>
    <property type="match status" value="1"/>
</dbReference>
<dbReference type="Gene3D" id="3.30.420.10">
    <property type="entry name" value="Ribonuclease H-like superfamily/Ribonuclease H"/>
    <property type="match status" value="1"/>
</dbReference>
<dbReference type="HAMAP" id="MF_03031">
    <property type="entry name" value="AGO2"/>
    <property type="match status" value="1"/>
</dbReference>
<dbReference type="InterPro" id="IPR028602">
    <property type="entry name" value="AGO2"/>
</dbReference>
<dbReference type="InterPro" id="IPR014811">
    <property type="entry name" value="ArgoL1"/>
</dbReference>
<dbReference type="InterPro" id="IPR032472">
    <property type="entry name" value="ArgoL2"/>
</dbReference>
<dbReference type="InterPro" id="IPR032473">
    <property type="entry name" value="Argonaute_Mid_dom"/>
</dbReference>
<dbReference type="InterPro" id="IPR032474">
    <property type="entry name" value="Argonaute_N"/>
</dbReference>
<dbReference type="InterPro" id="IPR003100">
    <property type="entry name" value="PAZ_dom"/>
</dbReference>
<dbReference type="InterPro" id="IPR036085">
    <property type="entry name" value="PAZ_dom_sf"/>
</dbReference>
<dbReference type="InterPro" id="IPR003165">
    <property type="entry name" value="Piwi"/>
</dbReference>
<dbReference type="InterPro" id="IPR045246">
    <property type="entry name" value="Piwi_ago-like"/>
</dbReference>
<dbReference type="InterPro" id="IPR012337">
    <property type="entry name" value="RNaseH-like_sf"/>
</dbReference>
<dbReference type="InterPro" id="IPR036397">
    <property type="entry name" value="RNaseH_sf"/>
</dbReference>
<dbReference type="PANTHER" id="PTHR22891">
    <property type="entry name" value="EUKARYOTIC TRANSLATION INITIATION FACTOR 2C"/>
    <property type="match status" value="1"/>
</dbReference>
<dbReference type="Pfam" id="PF08699">
    <property type="entry name" value="ArgoL1"/>
    <property type="match status" value="1"/>
</dbReference>
<dbReference type="Pfam" id="PF16488">
    <property type="entry name" value="ArgoL2"/>
    <property type="match status" value="1"/>
</dbReference>
<dbReference type="Pfam" id="PF16487">
    <property type="entry name" value="ArgoMid"/>
    <property type="match status" value="1"/>
</dbReference>
<dbReference type="Pfam" id="PF16486">
    <property type="entry name" value="ArgoN"/>
    <property type="match status" value="1"/>
</dbReference>
<dbReference type="Pfam" id="PF02170">
    <property type="entry name" value="PAZ"/>
    <property type="match status" value="1"/>
</dbReference>
<dbReference type="Pfam" id="PF02171">
    <property type="entry name" value="Piwi"/>
    <property type="match status" value="1"/>
</dbReference>
<dbReference type="SMART" id="SM01163">
    <property type="entry name" value="DUF1785"/>
    <property type="match status" value="1"/>
</dbReference>
<dbReference type="SMART" id="SM00949">
    <property type="entry name" value="PAZ"/>
    <property type="match status" value="1"/>
</dbReference>
<dbReference type="SMART" id="SM00950">
    <property type="entry name" value="Piwi"/>
    <property type="match status" value="1"/>
</dbReference>
<dbReference type="SUPFAM" id="SSF101690">
    <property type="entry name" value="PAZ domain"/>
    <property type="match status" value="1"/>
</dbReference>
<dbReference type="SUPFAM" id="SSF53098">
    <property type="entry name" value="Ribonuclease H-like"/>
    <property type="match status" value="1"/>
</dbReference>
<dbReference type="PROSITE" id="PS50821">
    <property type="entry name" value="PAZ"/>
    <property type="match status" value="1"/>
</dbReference>
<dbReference type="PROSITE" id="PS50822">
    <property type="entry name" value="PIWI"/>
    <property type="match status" value="1"/>
</dbReference>
<sequence length="859" mass="97208">MYSGAGPALAPPAPPPPIQGYAFKPPPRPDFGTSGRTIKLQANFFEMDIPKIDIYHYELDIKPEKCPRRVNREIVEHMVQHFKTQIFGDRKPVFDGRKNLYTAMPLPIGRDKVELEVTLPGEGKDRIFKVSIKWVSCVSLQALHDALSGRLPSVPFETIQALDVVMRHLPSMRYTPVGRSFFTASEGCSNPLGGGREVWFGFHQSVRPSLWKMMLNIDVSATAFYKAQPVIEFVCEVLDFKSIEEQQKPLTDSQRVKFTKEIKGLKVEITHCGQMKRKYRVCNVTRRPASHQTFPLQQESGQTVECTVAQYFKDRHKLVLRYPHLPCLQVGQEQKHTYLPLEVCNIVAGQRCIKKLTDNQTSTMIRATARSAPDRQEEISKLMRSASFNTDPYVREFGIMVKDEMTDVTGRVLQPPSILYGGRNKAIATPVQGVWDMRNKQFHTGIEIKVWAIACFAPQRQCTEVHLKSFTEQLRKISRDAGMPIQGQPCFCKYAQGADSVEPMFRHLKNTYAGLQLVVVILPGKTPVYAEVKRVGDTVLGMATQCVQMKNVQRTTPQTLSNLCLKINVKLGGVNNILLPQGRPPVFQQPVIFLGADVTHPPAGDGKKPSIAAVVGSMDAHPNRYCATVRVQQHRQEIIQDLAAMVRELLIQFYKSTRFKPTRIIFYRDGVSEGQFQQVLHHELLAIREACIKLEKDYQPGITFIVVQKRHHTRLFCTDKNERVGKSGNIPAGTTVDTKITHPTEFDFYLCSHAGIQGTSRPSHYHVLWDDNRFSSDELQILTYQLCHTYVRCTRSVSIPAPAYYAHLVAFRARYHLVDKEHDSAEGSHTSGQSNGRDHQALAKAVQVHQDTLRTMYFA</sequence>